<evidence type="ECO:0000255" key="1">
    <source>
        <dbReference type="HAMAP-Rule" id="MF_01379"/>
    </source>
</evidence>
<evidence type="ECO:0000303" key="2">
    <source ref="2"/>
</evidence>
<keyword id="KW-0007">Acetylation</keyword>
<keyword id="KW-0106">Calcium</keyword>
<keyword id="KW-0148">Chlorophyll</keyword>
<keyword id="KW-0150">Chloroplast</keyword>
<keyword id="KW-0157">Chromophore</keyword>
<keyword id="KW-0249">Electron transport</keyword>
<keyword id="KW-0359">Herbicide resistance</keyword>
<keyword id="KW-0408">Iron</keyword>
<keyword id="KW-0460">Magnesium</keyword>
<keyword id="KW-0464">Manganese</keyword>
<keyword id="KW-0472">Membrane</keyword>
<keyword id="KW-0479">Metal-binding</keyword>
<keyword id="KW-0560">Oxidoreductase</keyword>
<keyword id="KW-0597">Phosphoprotein</keyword>
<keyword id="KW-0602">Photosynthesis</keyword>
<keyword id="KW-0604">Photosystem II</keyword>
<keyword id="KW-0934">Plastid</keyword>
<keyword id="KW-1185">Reference proteome</keyword>
<keyword id="KW-0793">Thylakoid</keyword>
<keyword id="KW-0812">Transmembrane</keyword>
<keyword id="KW-1133">Transmembrane helix</keyword>
<keyword id="KW-0813">Transport</keyword>
<gene>
    <name evidence="1" type="primary">psbA</name>
</gene>
<organism>
    <name type="scientific">Triticum aestivum</name>
    <name type="common">Wheat</name>
    <dbReference type="NCBI Taxonomy" id="4565"/>
    <lineage>
        <taxon>Eukaryota</taxon>
        <taxon>Viridiplantae</taxon>
        <taxon>Streptophyta</taxon>
        <taxon>Embryophyta</taxon>
        <taxon>Tracheophyta</taxon>
        <taxon>Spermatophyta</taxon>
        <taxon>Magnoliopsida</taxon>
        <taxon>Liliopsida</taxon>
        <taxon>Poales</taxon>
        <taxon>Poaceae</taxon>
        <taxon>BOP clade</taxon>
        <taxon>Pooideae</taxon>
        <taxon>Triticodae</taxon>
        <taxon>Triticeae</taxon>
        <taxon>Triticinae</taxon>
        <taxon>Triticum</taxon>
    </lineage>
</organism>
<protein>
    <recommendedName>
        <fullName evidence="1">Photosystem II protein D1</fullName>
        <shortName evidence="1">PSII D1 protein</shortName>
        <ecNumber evidence="1">1.10.3.9</ecNumber>
    </recommendedName>
    <alternativeName>
        <fullName evidence="2">32 kDa thylakoid membrane protein</fullName>
    </alternativeName>
    <alternativeName>
        <fullName evidence="1">Photosystem II Q(B) protein</fullName>
    </alternativeName>
</protein>
<comment type="function">
    <text evidence="1">Photosystem II (PSII) is a light-driven water:plastoquinone oxidoreductase that uses light energy to abstract electrons from H(2)O, generating O(2) and a proton gradient subsequently used for ATP formation. It consists of a core antenna complex that captures photons, and an electron transfer chain that converts photonic excitation into a charge separation. The D1/D2 (PsbA/PsbD) reaction center heterodimer binds P680, the primary electron donor of PSII as well as several subsequent electron acceptors.</text>
</comment>
<comment type="catalytic activity">
    <reaction evidence="1">
        <text>2 a plastoquinone + 4 hnu + 2 H2O = 2 a plastoquinol + O2</text>
        <dbReference type="Rhea" id="RHEA:36359"/>
        <dbReference type="Rhea" id="RHEA-COMP:9561"/>
        <dbReference type="Rhea" id="RHEA-COMP:9562"/>
        <dbReference type="ChEBI" id="CHEBI:15377"/>
        <dbReference type="ChEBI" id="CHEBI:15379"/>
        <dbReference type="ChEBI" id="CHEBI:17757"/>
        <dbReference type="ChEBI" id="CHEBI:30212"/>
        <dbReference type="ChEBI" id="CHEBI:62192"/>
        <dbReference type="EC" id="1.10.3.9"/>
    </reaction>
</comment>
<comment type="cofactor">
    <text evidence="1">The D1/D2 heterodimer binds P680, chlorophylls that are the primary electron donor of PSII, and subsequent electron acceptors. It shares a non-heme iron and each subunit binds pheophytin, quinone, additional chlorophylls, carotenoids and lipids. D1 provides most of the ligands for the Mn4-Ca-O5 cluster of the oxygen-evolving complex (OEC). There is also a Cl(-1) ion associated with D1 and D2, which is required for oxygen evolution. The PSII complex binds additional chlorophylls, carotenoids and specific lipids.</text>
</comment>
<comment type="subunit">
    <text evidence="1">PSII is composed of 1 copy each of membrane proteins PsbA, PsbB, PsbC, PsbD, PsbE, PsbF, PsbH, PsbI, PsbJ, PsbK, PsbL, PsbM, PsbT, PsbX, PsbY, PsbZ, Psb30/Ycf12, at least 3 peripheral proteins of the oxygen-evolving complex and a large number of cofactors. It forms dimeric complexes.</text>
</comment>
<comment type="subcellular location">
    <subcellularLocation>
        <location evidence="1">Plastid</location>
        <location evidence="1">Chloroplast thylakoid membrane</location>
        <topology evidence="1">Multi-pass membrane protein</topology>
    </subcellularLocation>
</comment>
<comment type="PTM">
    <text evidence="1">Tyr-161 forms a radical intermediate that is referred to as redox-active TyrZ, YZ or Y-Z.</text>
</comment>
<comment type="PTM">
    <text evidence="1">C-terminally processed by CTPA; processing is essential to allow assembly of the oxygen-evolving complex and thus photosynthetic growth.</text>
</comment>
<comment type="miscellaneous">
    <text evidence="1">2 of the reaction center chlorophylls (ChlD1 and ChlD2) are entirely coordinated by water.</text>
</comment>
<comment type="miscellaneous">
    <text evidence="1">Herbicides such as atrazine, BNT, diuron or ioxynil bind in the Q(B) binding site and block subsequent electron transfer.</text>
</comment>
<comment type="similarity">
    <text evidence="1">Belongs to the reaction center PufL/M/PsbA/D family.</text>
</comment>
<name>PSBA_WHEAT</name>
<dbReference type="EC" id="1.10.3.9" evidence="1"/>
<dbReference type="EMBL" id="AB042240">
    <property type="protein sequence ID" value="BAB47014.1"/>
    <property type="molecule type" value="Genomic_DNA"/>
</dbReference>
<dbReference type="EMBL" id="M21352">
    <property type="protein sequence ID" value="AAA84729.1"/>
    <property type="molecule type" value="Genomic_DNA"/>
</dbReference>
<dbReference type="PIR" id="JA0146">
    <property type="entry name" value="JA0146"/>
</dbReference>
<dbReference type="RefSeq" id="NP_114239.1">
    <property type="nucleotide sequence ID" value="NC_002762.1"/>
</dbReference>
<dbReference type="SMR" id="P12463"/>
<dbReference type="STRING" id="4565.P12463"/>
<dbReference type="PaxDb" id="4565-EPlTAEP00000010044"/>
<dbReference type="EnsemblPlants" id="TraesKARUn01G0026190.1">
    <property type="protein sequence ID" value="cds.TraesKARUn01G0026190.1"/>
    <property type="gene ID" value="TraesKARUn01G0026190"/>
</dbReference>
<dbReference type="EnsemblPlants" id="TraesKARUn01G0026820.1">
    <property type="protein sequence ID" value="cds.TraesKARUn01G0026820.1"/>
    <property type="gene ID" value="TraesKARUn01G0026820"/>
</dbReference>
<dbReference type="EnsemblPlants" id="TraesKARUn01G0027700.1">
    <property type="protein sequence ID" value="cds.TraesKARUn01G0027700.1"/>
    <property type="gene ID" value="TraesKARUn01G0027700"/>
</dbReference>
<dbReference type="EnsemblPlants" id="TraesKARUn01G0029970.1">
    <property type="protein sequence ID" value="cds.TraesKARUn01G0029970.1"/>
    <property type="gene ID" value="TraesKARUn01G0029970"/>
</dbReference>
<dbReference type="EnsemblPlants" id="TraesKARUn01G0030260.1">
    <property type="protein sequence ID" value="cds.TraesKARUn01G0030260.1"/>
    <property type="gene ID" value="TraesKARUn01G0030260"/>
</dbReference>
<dbReference type="EnsemblPlants" id="TraesKARUn01G0031480.1">
    <property type="protein sequence ID" value="cds.TraesKARUn01G0031480.1"/>
    <property type="gene ID" value="TraesKARUn01G0031480"/>
</dbReference>
<dbReference type="EnsemblPlants" id="TraesKARUn01G0031750.1">
    <property type="protein sequence ID" value="cds.TraesKARUn01G0031750.1"/>
    <property type="gene ID" value="TraesKARUn01G0031750"/>
</dbReference>
<dbReference type="EnsemblPlants" id="TraesKARUn01G0035040.1">
    <property type="protein sequence ID" value="cds.TraesKARUn01G0035040.1"/>
    <property type="gene ID" value="TraesKARUn01G0035040"/>
</dbReference>
<dbReference type="EnsemblPlants" id="TraesKARUn01G0036960.1">
    <property type="protein sequence ID" value="cds.TraesKARUn01G0036960.1"/>
    <property type="gene ID" value="TraesKARUn01G0036960"/>
</dbReference>
<dbReference type="EnsemblPlants" id="TraesKARUn01G0057910.1">
    <property type="protein sequence ID" value="cds.TraesKARUn01G0057910.1"/>
    <property type="gene ID" value="TraesKARUn01G0057910"/>
</dbReference>
<dbReference type="EnsemblPlants" id="TraesKARUn01G0060130.1">
    <property type="protein sequence ID" value="cds.TraesKARUn01G0060130.1"/>
    <property type="gene ID" value="TraesKARUn01G0060130"/>
</dbReference>
<dbReference type="EnsemblPlants" id="TraesKARUn01G0060230.1">
    <property type="protein sequence ID" value="cds.TraesKARUn01G0060230.1"/>
    <property type="gene ID" value="TraesKARUn01G0060230"/>
</dbReference>
<dbReference type="EnsemblPlants" id="TraesKARUn01G0060350.1">
    <property type="protein sequence ID" value="cds.TraesKARUn01G0060350.1"/>
    <property type="gene ID" value="TraesKARUn01G0060350"/>
</dbReference>
<dbReference type="EnsemblPlants" id="TraesKARUn01G0066030.1">
    <property type="protein sequence ID" value="cds.TraesKARUn01G0066030.1"/>
    <property type="gene ID" value="TraesKARUn01G0066030"/>
</dbReference>
<dbReference type="EnsemblPlants" id="TraesKARUn01G0066160.1">
    <property type="protein sequence ID" value="cds.TraesKARUn01G0066160.1"/>
    <property type="gene ID" value="TraesKARUn01G0066160"/>
</dbReference>
<dbReference type="EnsemblPlants" id="TraesKARUn01G0069820.1">
    <property type="protein sequence ID" value="cds.TraesKARUn01G0069820.1"/>
    <property type="gene ID" value="TraesKARUn01G0069820"/>
</dbReference>
<dbReference type="EnsemblPlants" id="TraesKARUn01G0070460.1">
    <property type="protein sequence ID" value="cds.TraesKARUn01G0070460.1"/>
    <property type="gene ID" value="TraesKARUn01G0070460"/>
</dbReference>
<dbReference type="EnsemblPlants" id="TraesKARUn01G0070500.1">
    <property type="protein sequence ID" value="cds.TraesKARUn01G0070500.1"/>
    <property type="gene ID" value="TraesKARUn01G0070500"/>
</dbReference>
<dbReference type="EnsemblPlants" id="TraesKARUn01G0071180.1">
    <property type="protein sequence ID" value="cds.TraesKARUn01G0071180.1"/>
    <property type="gene ID" value="TraesKARUn01G0071180"/>
</dbReference>
<dbReference type="EnsemblPlants" id="TraesKARUn01G0071240.1">
    <property type="protein sequence ID" value="cds.TraesKARUn01G0071240.1"/>
    <property type="gene ID" value="TraesKARUn01G0071240"/>
</dbReference>
<dbReference type="EnsemblPlants" id="TraesKARUn01G0071760.1">
    <property type="protein sequence ID" value="cds.TraesKARUn01G0071760.1"/>
    <property type="gene ID" value="TraesKARUn01G0071760"/>
</dbReference>
<dbReference type="EnsemblPlants" id="TraesKARUn01G0071990.1">
    <property type="protein sequence ID" value="cds.TraesKARUn01G0071990.1"/>
    <property type="gene ID" value="TraesKARUn01G0071990"/>
</dbReference>
<dbReference type="EnsemblPlants" id="TraesKARUn01G0072490.1">
    <property type="protein sequence ID" value="cds.TraesKARUn01G0072490.1"/>
    <property type="gene ID" value="TraesKARUn01G0072490"/>
</dbReference>
<dbReference type="EnsemblPlants" id="TraesKARUn01G0072860.1">
    <property type="protein sequence ID" value="cds.TraesKARUn01G0072860.1"/>
    <property type="gene ID" value="TraesKARUn01G0072860"/>
</dbReference>
<dbReference type="EnsemblPlants" id="TraesKARUn01G0073170.1">
    <property type="protein sequence ID" value="cds.TraesKARUn01G0073170.1"/>
    <property type="gene ID" value="TraesKARUn01G0073170"/>
</dbReference>
<dbReference type="EnsemblPlants" id="TraesKARUn01G0074480.1">
    <property type="protein sequence ID" value="cds.TraesKARUn01G0074480.1"/>
    <property type="gene ID" value="TraesKARUn01G0074480"/>
</dbReference>
<dbReference type="EnsemblPlants" id="TraesKARUn01G0074600.1">
    <property type="protein sequence ID" value="cds.TraesKARUn01G0074600.1"/>
    <property type="gene ID" value="TraesKARUn01G0074600"/>
</dbReference>
<dbReference type="EnsemblPlants" id="TraesKARUn01G0075070.1">
    <property type="protein sequence ID" value="cds.TraesKARUn01G0075070.1"/>
    <property type="gene ID" value="TraesKARUn01G0075070"/>
</dbReference>
<dbReference type="EnsemblPlants" id="TraesKARUn01G0078350.1">
    <property type="protein sequence ID" value="cds.TraesKARUn01G0078350.1"/>
    <property type="gene ID" value="TraesKARUn01G0078350"/>
</dbReference>
<dbReference type="EnsemblPlants" id="TraesKARUn01G0078540.1">
    <property type="protein sequence ID" value="cds.TraesKARUn01G0078540.1"/>
    <property type="gene ID" value="TraesKARUn01G0078540"/>
</dbReference>
<dbReference type="EnsemblPlants" id="TraesKARUn01G0078770.1">
    <property type="protein sequence ID" value="cds.TraesKARUn01G0078770.1"/>
    <property type="gene ID" value="TraesKARUn01G0078770"/>
</dbReference>
<dbReference type="EnsemblPlants" id="TraesKARUn01G0078820.1">
    <property type="protein sequence ID" value="cds.TraesKARUn01G0078820.1"/>
    <property type="gene ID" value="TraesKARUn01G0078820"/>
</dbReference>
<dbReference type="EnsemblPlants" id="TraesKARUn01G0079380.1">
    <property type="protein sequence ID" value="cds.TraesKARUn01G0079380.1"/>
    <property type="gene ID" value="TraesKARUn01G0079380"/>
</dbReference>
<dbReference type="EnsemblPlants" id="TraesKARUn01G0079410.1">
    <property type="protein sequence ID" value="cds.TraesKARUn01G0079410.1"/>
    <property type="gene ID" value="TraesKARUn01G0079410"/>
</dbReference>
<dbReference type="EnsemblPlants" id="TraesKARUn01G0081250.1">
    <property type="protein sequence ID" value="cds.TraesKARUn01G0081250.1"/>
    <property type="gene ID" value="TraesKARUn01G0081250"/>
</dbReference>
<dbReference type="EnsemblPlants" id="TraesKARUn01G0081330.1">
    <property type="protein sequence ID" value="cds.TraesKARUn01G0081330.1"/>
    <property type="gene ID" value="TraesKARUn01G0081330"/>
</dbReference>
<dbReference type="EnsemblPlants" id="TraesKARUn01G0082150.1">
    <property type="protein sequence ID" value="cds.TraesKARUn01G0082150.1"/>
    <property type="gene ID" value="TraesKARUn01G0082150"/>
</dbReference>
<dbReference type="EnsemblPlants" id="TraesKARUn01G0084730.1">
    <property type="protein sequence ID" value="cds.TraesKARUn01G0084730.1"/>
    <property type="gene ID" value="TraesKARUn01G0084730"/>
</dbReference>
<dbReference type="EnsemblPlants" id="TraesKARUn01G0085820.1">
    <property type="protein sequence ID" value="cds.TraesKARUn01G0085820.1"/>
    <property type="gene ID" value="TraesKARUn01G0085820"/>
</dbReference>
<dbReference type="EnsemblPlants" id="TraesKARUn01G0085910.1">
    <property type="protein sequence ID" value="cds.TraesKARUn01G0085910.1"/>
    <property type="gene ID" value="TraesKARUn01G0085910"/>
</dbReference>
<dbReference type="EnsemblPlants" id="TraesKARUn01G0086580.1">
    <property type="protein sequence ID" value="cds.TraesKARUn01G0086580.1"/>
    <property type="gene ID" value="TraesKARUn01G0086580"/>
</dbReference>
<dbReference type="EnsemblPlants" id="TraesKARUn01G0087000.1">
    <property type="protein sequence ID" value="cds.TraesKARUn01G0087000.1"/>
    <property type="gene ID" value="TraesKARUn01G0087000"/>
</dbReference>
<dbReference type="EnsemblPlants" id="TraesKARUn01G0087350.1">
    <property type="protein sequence ID" value="cds.TraesKARUn01G0087350.1"/>
    <property type="gene ID" value="TraesKARUn01G0087350"/>
</dbReference>
<dbReference type="EnsemblPlants" id="TraesKARUn01G0088720.1">
    <property type="protein sequence ID" value="cds.TraesKARUn01G0088720.1"/>
    <property type="gene ID" value="TraesKARUn01G0088720"/>
</dbReference>
<dbReference type="EnsemblPlants" id="TraesKARUn01G0089720.1">
    <property type="protein sequence ID" value="cds.TraesKARUn01G0089720.1"/>
    <property type="gene ID" value="TraesKARUn01G0089720"/>
</dbReference>
<dbReference type="EnsemblPlants" id="TraesKARUn01G0091430.1">
    <property type="protein sequence ID" value="cds.TraesKARUn01G0091430.1"/>
    <property type="gene ID" value="TraesKARUn01G0091430"/>
</dbReference>
<dbReference type="EnsemblPlants" id="TraesKARUn01G0091810.1">
    <property type="protein sequence ID" value="cds.TraesKARUn01G0091810.1"/>
    <property type="gene ID" value="TraesKARUn01G0091810"/>
</dbReference>
<dbReference type="EnsemblPlants" id="TraesKARUn01G0092620.1">
    <property type="protein sequence ID" value="cds.TraesKARUn01G0092620.1"/>
    <property type="gene ID" value="TraesKARUn01G0092620"/>
</dbReference>
<dbReference type="EnsemblPlants" id="TraesKARUn01G0093200.1">
    <property type="protein sequence ID" value="cds.TraesKARUn01G0093200.1"/>
    <property type="gene ID" value="TraesKARUn01G0093200"/>
</dbReference>
<dbReference type="EnsemblPlants" id="TraesKARUn01G0094290.1">
    <property type="protein sequence ID" value="cds.TraesKARUn01G0094290.1"/>
    <property type="gene ID" value="TraesKARUn01G0094290"/>
</dbReference>
<dbReference type="EnsemblPlants" id="TraesKARUn01G0094660.1">
    <property type="protein sequence ID" value="cds.TraesKARUn01G0094660.1"/>
    <property type="gene ID" value="TraesKARUn01G0094660"/>
</dbReference>
<dbReference type="EnsemblPlants" id="TraesKARUn01G0098030.1">
    <property type="protein sequence ID" value="cds.TraesKARUn01G0098030.1"/>
    <property type="gene ID" value="TraesKARUn01G0098030"/>
</dbReference>
<dbReference type="EnsemblPlants" id="TraesKARUn01G0099400.1">
    <property type="protein sequence ID" value="cds.TraesKARUn01G0099400.1"/>
    <property type="gene ID" value="TraesKARUn01G0099400"/>
</dbReference>
<dbReference type="EnsemblPlants" id="TraesKARUn01G0099550.1">
    <property type="protein sequence ID" value="cds.TraesKARUn01G0099550.1"/>
    <property type="gene ID" value="TraesKARUn01G0099550"/>
</dbReference>
<dbReference type="EnsemblPlants" id="TraesKARUn01G0100410.1">
    <property type="protein sequence ID" value="cds.TraesKARUn01G0100410.1"/>
    <property type="gene ID" value="TraesKARUn01G0100410"/>
</dbReference>
<dbReference type="EnsemblPlants" id="TraesKARUn01G0103190.1">
    <property type="protein sequence ID" value="cds.TraesKARUn01G0103190.1"/>
    <property type="gene ID" value="TraesKARUn01G0103190"/>
</dbReference>
<dbReference type="EnsemblPlants" id="TraesKARUn01G0103700.1">
    <property type="protein sequence ID" value="cds.TraesKARUn01G0103700.1"/>
    <property type="gene ID" value="TraesKARUn01G0103700"/>
</dbReference>
<dbReference type="EnsemblPlants" id="TraesKARUn01G0103750.1">
    <property type="protein sequence ID" value="cds.TraesKARUn01G0103750.1"/>
    <property type="gene ID" value="TraesKARUn01G0103750"/>
</dbReference>
<dbReference type="EnsemblPlants" id="TraesKARUn01G0104000.1">
    <property type="protein sequence ID" value="cds.TraesKARUn01G0104000.1"/>
    <property type="gene ID" value="TraesKARUn01G0104000"/>
</dbReference>
<dbReference type="EnsemblPlants" id="TraesKARUn01G0104550.1">
    <property type="protein sequence ID" value="cds.TraesKARUn01G0104550.1"/>
    <property type="gene ID" value="TraesKARUn01G0104550"/>
</dbReference>
<dbReference type="EnsemblPlants" id="TraesKARUn01G0105410.1">
    <property type="protein sequence ID" value="cds.TraesKARUn01G0105410.1"/>
    <property type="gene ID" value="TraesKARUn01G0105410"/>
</dbReference>
<dbReference type="EnsemblPlants" id="TraesKARUn01G0105630.1">
    <property type="protein sequence ID" value="cds.TraesKARUn01G0105630.1"/>
    <property type="gene ID" value="TraesKARUn01G0105630"/>
</dbReference>
<dbReference type="EnsemblPlants" id="TraesKARUn01G0108170.1">
    <property type="protein sequence ID" value="cds.TraesKARUn01G0108170.1"/>
    <property type="gene ID" value="TraesKARUn01G0108170"/>
</dbReference>
<dbReference type="EnsemblPlants" id="TraesKARUn01G0109580.1">
    <property type="protein sequence ID" value="cds.TraesKARUn01G0109580.1"/>
    <property type="gene ID" value="TraesKARUn01G0109580"/>
</dbReference>
<dbReference type="EnsemblPlants" id="TraesKARUn01G0110740.1">
    <property type="protein sequence ID" value="cds.TraesKARUn01G0110740.1"/>
    <property type="gene ID" value="TraesKARUn01G0110740"/>
</dbReference>
<dbReference type="EnsemblPlants" id="TraesKARUn01G0110890.1">
    <property type="protein sequence ID" value="cds.TraesKARUn01G0110890.1"/>
    <property type="gene ID" value="TraesKARUn01G0110890"/>
</dbReference>
<dbReference type="EnsemblPlants" id="TraesKARUn01G0111070.1">
    <property type="protein sequence ID" value="cds.TraesKARUn01G0111070.1"/>
    <property type="gene ID" value="TraesKARUn01G0111070"/>
</dbReference>
<dbReference type="EnsemblPlants" id="TraesKARUn01G0111100.1">
    <property type="protein sequence ID" value="cds.TraesKARUn01G0111100.1"/>
    <property type="gene ID" value="TraesKARUn01G0111100"/>
</dbReference>
<dbReference type="EnsemblPlants" id="TraesKARUn01G0115470.1">
    <property type="protein sequence ID" value="cds.TraesKARUn01G0115470.1"/>
    <property type="gene ID" value="TraesKARUn01G0115470"/>
</dbReference>
<dbReference type="EnsemblPlants" id="TraesKARUn01G0119780.1">
    <property type="protein sequence ID" value="cds.TraesKARUn01G0119780.1"/>
    <property type="gene ID" value="TraesKARUn01G0119780"/>
</dbReference>
<dbReference type="EnsemblPlants" id="TraesKARUn01G0119830.1">
    <property type="protein sequence ID" value="cds.TraesKARUn01G0119830.1"/>
    <property type="gene ID" value="TraesKARUn01G0119830"/>
</dbReference>
<dbReference type="EnsemblPlants" id="TraesKARUn01G0120320.1">
    <property type="protein sequence ID" value="cds.TraesKARUn01G0120320.1"/>
    <property type="gene ID" value="TraesKARUn01G0120320"/>
</dbReference>
<dbReference type="EnsemblPlants" id="TraesKARUn01G0120540.1">
    <property type="protein sequence ID" value="cds.TraesKARUn01G0120540.1"/>
    <property type="gene ID" value="TraesKARUn01G0120540"/>
</dbReference>
<dbReference type="EnsemblPlants" id="TraesKARUn01G0120560.1">
    <property type="protein sequence ID" value="cds.TraesKARUn01G0120560.1"/>
    <property type="gene ID" value="TraesKARUn01G0120560"/>
</dbReference>
<dbReference type="EnsemblPlants" id="TraesKARUn01G0120580.1">
    <property type="protein sequence ID" value="cds.TraesKARUn01G0120580.1"/>
    <property type="gene ID" value="TraesKARUn01G0120580"/>
</dbReference>
<dbReference type="EnsemblPlants" id="TraesKARUn01G0121050.1">
    <property type="protein sequence ID" value="cds.TraesKARUn01G0121050.1"/>
    <property type="gene ID" value="TraesKARUn01G0121050"/>
</dbReference>
<dbReference type="EnsemblPlants" id="TraesKARUn01G0121060.1">
    <property type="protein sequence ID" value="cds.TraesKARUn01G0121060.1"/>
    <property type="gene ID" value="TraesKARUn01G0121060"/>
</dbReference>
<dbReference type="EnsemblPlants" id="TraesKARUn01G0121130.1">
    <property type="protein sequence ID" value="cds.TraesKARUn01G0121130.1"/>
    <property type="gene ID" value="TraesKARUn01G0121130"/>
</dbReference>
<dbReference type="EnsemblPlants" id="TraesKARUn01G0121310.1">
    <property type="protein sequence ID" value="cds.TraesKARUn01G0121310.1"/>
    <property type="gene ID" value="TraesKARUn01G0121310"/>
</dbReference>
<dbReference type="EnsemblPlants" id="TraesKARUn01G0121670.1">
    <property type="protein sequence ID" value="cds.TraesKARUn01G0121670.1"/>
    <property type="gene ID" value="TraesKARUn01G0121670"/>
</dbReference>
<dbReference type="EnsemblPlants" id="TraesKARUn01G0122090.1">
    <property type="protein sequence ID" value="cds.TraesKARUn01G0122090.1"/>
    <property type="gene ID" value="TraesKARUn01G0122090"/>
</dbReference>
<dbReference type="EnsemblPlants" id="TraesKARUn01G0122490.1">
    <property type="protein sequence ID" value="cds.TraesKARUn01G0122490.1"/>
    <property type="gene ID" value="TraesKARUn01G0122490"/>
</dbReference>
<dbReference type="EnsemblPlants" id="TraesKARUn01G0124890.1">
    <property type="protein sequence ID" value="cds.TraesKARUn01G0124890.1"/>
    <property type="gene ID" value="TraesKARUn01G0124890"/>
</dbReference>
<dbReference type="EnsemblPlants" id="TraesKARUn01G0124910.1">
    <property type="protein sequence ID" value="cds.TraesKARUn01G0124910.1"/>
    <property type="gene ID" value="TraesKARUn01G0124910"/>
</dbReference>
<dbReference type="EnsemblPlants" id="TraesKARUn01G0125110.1">
    <property type="protein sequence ID" value="cds.TraesKARUn01G0125110.1"/>
    <property type="gene ID" value="TraesKARUn01G0125110"/>
</dbReference>
<dbReference type="EnsemblPlants" id="TraesKARUn01G0126800.1">
    <property type="protein sequence ID" value="cds.TraesKARUn01G0126800.1"/>
    <property type="gene ID" value="TraesKARUn01G0126800"/>
</dbReference>
<dbReference type="EnsemblPlants" id="TraesKARUn01G0126970.1">
    <property type="protein sequence ID" value="cds.TraesKARUn01G0126970.1"/>
    <property type="gene ID" value="TraesKARUn01G0126970"/>
</dbReference>
<dbReference type="EnsemblPlants" id="TraesKARUn01G0127610.1">
    <property type="protein sequence ID" value="cds.TraesKARUn01G0127610.1"/>
    <property type="gene ID" value="TraesKARUn01G0127610"/>
</dbReference>
<dbReference type="EnsemblPlants" id="TraesKARUn01G0128310.1">
    <property type="protein sequence ID" value="cds.TraesKARUn01G0128310.1"/>
    <property type="gene ID" value="TraesKARUn01G0128310"/>
</dbReference>
<dbReference type="EnsemblPlants" id="TraesKARUn01G0129690.1">
    <property type="protein sequence ID" value="cds.TraesKARUn01G0129690.1"/>
    <property type="gene ID" value="TraesKARUn01G0129690"/>
</dbReference>
<dbReference type="EnsemblPlants" id="TraesKARUn01G0131130.1">
    <property type="protein sequence ID" value="cds.TraesKARUn01G0131130.1"/>
    <property type="gene ID" value="TraesKARUn01G0131130"/>
</dbReference>
<dbReference type="EnsemblPlants" id="TraesKARUn01G0131260.1">
    <property type="protein sequence ID" value="cds.TraesKARUn01G0131260.1"/>
    <property type="gene ID" value="TraesKARUn01G0131260"/>
</dbReference>
<dbReference type="EnsemblPlants" id="TraesKARUn01G0131320.1">
    <property type="protein sequence ID" value="cds.TraesKARUn01G0131320.1"/>
    <property type="gene ID" value="TraesKARUn01G0131320"/>
</dbReference>
<dbReference type="EnsemblPlants" id="TraesKARUn01G0131450.1">
    <property type="protein sequence ID" value="cds.TraesKARUn01G0131450.1"/>
    <property type="gene ID" value="TraesKARUn01G0131450"/>
</dbReference>
<dbReference type="EnsemblPlants" id="TraesKARUn01G0131750.1">
    <property type="protein sequence ID" value="cds.TraesKARUn01G0131750.1"/>
    <property type="gene ID" value="TraesKARUn01G0131750"/>
</dbReference>
<dbReference type="EnsemblPlants" id="TraesKARUn01G0131910.1">
    <property type="protein sequence ID" value="cds.TraesKARUn01G0131910.1"/>
    <property type="gene ID" value="TraesKARUn01G0131910"/>
</dbReference>
<dbReference type="EnsemblPlants" id="TraesKARUn01G0131920.1">
    <property type="protein sequence ID" value="cds.TraesKARUn01G0131920.1"/>
    <property type="gene ID" value="TraesKARUn01G0131920"/>
</dbReference>
<dbReference type="EnsemblPlants" id="TraesKARUn01G0132510.1">
    <property type="protein sequence ID" value="cds.TraesKARUn01G0132510.1"/>
    <property type="gene ID" value="TraesKARUn01G0132510"/>
</dbReference>
<dbReference type="EnsemblPlants" id="TraesKARUn01G0132880.1">
    <property type="protein sequence ID" value="cds.TraesKARUn01G0132880.1"/>
    <property type="gene ID" value="TraesKARUn01G0132880"/>
</dbReference>
<dbReference type="EnsemblPlants" id="TraesKARUn01G0132990.1">
    <property type="protein sequence ID" value="cds.TraesKARUn01G0132990.1"/>
    <property type="gene ID" value="TraesKARUn01G0132990"/>
</dbReference>
<dbReference type="EnsemblPlants" id="TraesKARUn01G0133620.1">
    <property type="protein sequence ID" value="cds.TraesKARUn01G0133620.1"/>
    <property type="gene ID" value="TraesKARUn01G0133620"/>
</dbReference>
<dbReference type="EnsemblPlants" id="TraesKARUn01G0134180.1">
    <property type="protein sequence ID" value="cds.TraesKARUn01G0134180.1"/>
    <property type="gene ID" value="TraesKARUn01G0134180"/>
</dbReference>
<dbReference type="EnsemblPlants" id="TraesKARUn01G0135610.1">
    <property type="protein sequence ID" value="cds.TraesKARUn01G0135610.1"/>
    <property type="gene ID" value="TraesKARUn01G0135610"/>
</dbReference>
<dbReference type="EnsemblPlants" id="TraesKARUn01G0137670.1">
    <property type="protein sequence ID" value="cds.TraesKARUn01G0137670.1"/>
    <property type="gene ID" value="TraesKARUn01G0137670"/>
</dbReference>
<dbReference type="EnsemblPlants" id="TraesKARUn01G0138500.1">
    <property type="protein sequence ID" value="cds.TraesKARUn01G0138500.1"/>
    <property type="gene ID" value="TraesKARUn01G0138500"/>
</dbReference>
<dbReference type="EnsemblPlants" id="TraesKARUn01G0139520.1">
    <property type="protein sequence ID" value="cds.TraesKARUn01G0139520.1"/>
    <property type="gene ID" value="TraesKARUn01G0139520"/>
</dbReference>
<dbReference type="EnsemblPlants" id="TraesKARUn01G0139560.1">
    <property type="protein sequence ID" value="cds.TraesKARUn01G0139560.1"/>
    <property type="gene ID" value="TraesKARUn01G0139560"/>
</dbReference>
<dbReference type="EnsemblPlants" id="TraesKARUn01G0140530.1">
    <property type="protein sequence ID" value="cds.TraesKARUn01G0140530.1"/>
    <property type="gene ID" value="TraesKARUn01G0140530"/>
</dbReference>
<dbReference type="EnsemblPlants" id="TraesKARUn01G0140860.1">
    <property type="protein sequence ID" value="cds.TraesKARUn01G0140860.1"/>
    <property type="gene ID" value="TraesKARUn01G0140860"/>
</dbReference>
<dbReference type="EnsemblPlants" id="TraesKARUn01G0141490.1">
    <property type="protein sequence ID" value="cds.TraesKARUn01G0141490.1"/>
    <property type="gene ID" value="TraesKARUn01G0141490"/>
</dbReference>
<dbReference type="EnsemblPlants" id="TraesKARUn01G0145510.1">
    <property type="protein sequence ID" value="cds.TraesKARUn01G0145510.1"/>
    <property type="gene ID" value="TraesKARUn01G0145510"/>
</dbReference>
<dbReference type="EnsemblPlants" id="TraesKARUn01G0147120.1">
    <property type="protein sequence ID" value="cds.TraesKARUn01G0147120.1"/>
    <property type="gene ID" value="TraesKARUn01G0147120"/>
</dbReference>
<dbReference type="EnsemblPlants" id="TraesKARUn01G0147190.1">
    <property type="protein sequence ID" value="cds.TraesKARUn01G0147190.1"/>
    <property type="gene ID" value="TraesKARUn01G0147190"/>
</dbReference>
<dbReference type="EnsemblPlants" id="TraesKARUn01G0150140.1">
    <property type="protein sequence ID" value="cds.TraesKARUn01G0150140.1"/>
    <property type="gene ID" value="TraesKARUn01G0150140"/>
</dbReference>
<dbReference type="EnsemblPlants" id="TraesKARUn01G0151450.1">
    <property type="protein sequence ID" value="cds.TraesKARUn01G0151450.1"/>
    <property type="gene ID" value="TraesKARUn01G0151450"/>
</dbReference>
<dbReference type="EnsemblPlants" id="TraesKARUn01G0155540.1">
    <property type="protein sequence ID" value="cds.TraesKARUn01G0155540.1"/>
    <property type="gene ID" value="TraesKARUn01G0155540"/>
</dbReference>
<dbReference type="EnsemblPlants" id="TraesKARUn01G0155980.1">
    <property type="protein sequence ID" value="cds.TraesKARUn01G0155980.1"/>
    <property type="gene ID" value="TraesKARUn01G0155980"/>
</dbReference>
<dbReference type="EnsemblPlants" id="TraesKARUn01G0158860.1">
    <property type="protein sequence ID" value="cds.TraesKARUn01G0158860.1"/>
    <property type="gene ID" value="TraesKARUn01G0158860"/>
</dbReference>
<dbReference type="EnsemblPlants" id="TraesKARUn01G0160300.1">
    <property type="protein sequence ID" value="cds.TraesKARUn01G0160300.1"/>
    <property type="gene ID" value="TraesKARUn01G0160300"/>
</dbReference>
<dbReference type="EnsemblPlants" id="TraesKARUn01G0165470.1">
    <property type="protein sequence ID" value="cds.TraesKARUn01G0165470.1"/>
    <property type="gene ID" value="TraesKARUn01G0165470"/>
</dbReference>
<dbReference type="EnsemblPlants" id="TraesKARUn01G0168960.1">
    <property type="protein sequence ID" value="cds.TraesKARUn01G0168960.1"/>
    <property type="gene ID" value="TraesKARUn01G0168960"/>
</dbReference>
<dbReference type="EnsemblPlants" id="TraesKARUn01G0170910.1">
    <property type="protein sequence ID" value="cds.TraesKARUn01G0170910.1"/>
    <property type="gene ID" value="TraesKARUn01G0170910"/>
</dbReference>
<dbReference type="EnsemblPlants" id="TraesKARUn01G0171210.1">
    <property type="protein sequence ID" value="cds.TraesKARUn01G0171210.1"/>
    <property type="gene ID" value="TraesKARUn01G0171210"/>
</dbReference>
<dbReference type="EnsemblPlants" id="TraesKARUn01G0171570.1">
    <property type="protein sequence ID" value="cds.TraesKARUn01G0171570.1"/>
    <property type="gene ID" value="TraesKARUn01G0171570"/>
</dbReference>
<dbReference type="EnsemblPlants" id="TraesKARUn01G0172010.1">
    <property type="protein sequence ID" value="cds.TraesKARUn01G0172010.1"/>
    <property type="gene ID" value="TraesKARUn01G0172010"/>
</dbReference>
<dbReference type="EnsemblPlants" id="TraesKARUn01G0172610.1">
    <property type="protein sequence ID" value="cds.TraesKARUn01G0172610.1"/>
    <property type="gene ID" value="TraesKARUn01G0172610"/>
</dbReference>
<dbReference type="EnsemblPlants" id="TraesKARUn01G0173290.1">
    <property type="protein sequence ID" value="cds.TraesKARUn01G0173290.1"/>
    <property type="gene ID" value="TraesKARUn01G0173290"/>
</dbReference>
<dbReference type="EnsemblPlants" id="TraesKARUn01G0174040.1">
    <property type="protein sequence ID" value="cds.TraesKARUn01G0174040.1"/>
    <property type="gene ID" value="TraesKARUn01G0174040"/>
</dbReference>
<dbReference type="EnsemblPlants" id="TraesKARUn01G0174800.1">
    <property type="protein sequence ID" value="cds.TraesKARUn01G0174800.1"/>
    <property type="gene ID" value="TraesKARUn01G0174800"/>
</dbReference>
<dbReference type="EnsemblPlants" id="TraesKARUn01G0174910.1">
    <property type="protein sequence ID" value="cds.TraesKARUn01G0174910.1"/>
    <property type="gene ID" value="TraesKARUn01G0174910"/>
</dbReference>
<dbReference type="EnsemblPlants" id="TraesKARUn01G0175300.1">
    <property type="protein sequence ID" value="cds.TraesKARUn01G0175300.1"/>
    <property type="gene ID" value="TraesKARUn01G0175300"/>
</dbReference>
<dbReference type="EnsemblPlants" id="TraesKARUn01G0175350.1">
    <property type="protein sequence ID" value="cds.TraesKARUn01G0175350.1"/>
    <property type="gene ID" value="TraesKARUn01G0175350"/>
</dbReference>
<dbReference type="EnsemblPlants" id="TraesKARUn01G0176640.1">
    <property type="protein sequence ID" value="cds.TraesKARUn01G0176640.1"/>
    <property type="gene ID" value="TraesKARUn01G0176640"/>
</dbReference>
<dbReference type="EnsemblPlants" id="TraesKARUn01G0176830.1">
    <property type="protein sequence ID" value="cds.TraesKARUn01G0176830.1"/>
    <property type="gene ID" value="TraesKARUn01G0176830"/>
</dbReference>
<dbReference type="EnsemblPlants" id="TraesKARUn01G0177020.1">
    <property type="protein sequence ID" value="cds.TraesKARUn01G0177020.1"/>
    <property type="gene ID" value="TraesKARUn01G0177020"/>
</dbReference>
<dbReference type="EnsemblPlants" id="TraesKARUn01G0177200.1">
    <property type="protein sequence ID" value="cds.TraesKARUn01G0177200.1"/>
    <property type="gene ID" value="TraesKARUn01G0177200"/>
</dbReference>
<dbReference type="EnsemblPlants" id="TraesKARUn01G0180960.1">
    <property type="protein sequence ID" value="cds.TraesKARUn01G0180960.1"/>
    <property type="gene ID" value="TraesKARUn01G0180960"/>
</dbReference>
<dbReference type="EnsemblPlants" id="TraesKARUn01G0181080.1">
    <property type="protein sequence ID" value="cds.TraesKARUn01G0181080.1"/>
    <property type="gene ID" value="TraesKARUn01G0181080"/>
</dbReference>
<dbReference type="EnsemblPlants" id="TraesKARUn01G0181590.1">
    <property type="protein sequence ID" value="cds.TraesKARUn01G0181590.1"/>
    <property type="gene ID" value="TraesKARUn01G0181590"/>
</dbReference>
<dbReference type="EnsemblPlants" id="TraesKARUn01G0181830.1">
    <property type="protein sequence ID" value="cds.TraesKARUn01G0181830.1"/>
    <property type="gene ID" value="TraesKARUn01G0181830"/>
</dbReference>
<dbReference type="EnsemblPlants" id="TraesKARUn01G0182570.1">
    <property type="protein sequence ID" value="cds.TraesKARUn01G0182570.1"/>
    <property type="gene ID" value="TraesKARUn01G0182570"/>
</dbReference>
<dbReference type="EnsemblPlants" id="TraesKARUn01G0183190.1">
    <property type="protein sequence ID" value="cds.TraesKARUn01G0183190.1"/>
    <property type="gene ID" value="TraesKARUn01G0183190"/>
</dbReference>
<dbReference type="EnsemblPlants" id="TraesKARUn01G0183240.1">
    <property type="protein sequence ID" value="cds.TraesKARUn01G0183240.1"/>
    <property type="gene ID" value="TraesKARUn01G0183240"/>
</dbReference>
<dbReference type="EnsemblPlants" id="TraesKARUn01G0183610.1">
    <property type="protein sequence ID" value="cds.TraesKARUn01G0183610.1"/>
    <property type="gene ID" value="TraesKARUn01G0183610"/>
</dbReference>
<dbReference type="EnsemblPlants" id="TraesKARUn01G0183940.1">
    <property type="protein sequence ID" value="cds.TraesKARUn01G0183940.1"/>
    <property type="gene ID" value="TraesKARUn01G0183940"/>
</dbReference>
<dbReference type="EnsemblPlants" id="TraesKARUn01G0185180.1">
    <property type="protein sequence ID" value="cds.TraesKARUn01G0185180.1"/>
    <property type="gene ID" value="TraesKARUn01G0185180"/>
</dbReference>
<dbReference type="EnsemblPlants" id="TraesKARUn01G0185210.1">
    <property type="protein sequence ID" value="cds.TraesKARUn01G0185210.1"/>
    <property type="gene ID" value="TraesKARUn01G0185210"/>
</dbReference>
<dbReference type="EnsemblPlants" id="TraesKARUn01G0185630.1">
    <property type="protein sequence ID" value="cds.TraesKARUn01G0185630.1"/>
    <property type="gene ID" value="TraesKARUn01G0185630"/>
</dbReference>
<dbReference type="EnsemblPlants" id="TraesKARUn01G0186070.1">
    <property type="protein sequence ID" value="cds.TraesKARUn01G0186070.1"/>
    <property type="gene ID" value="TraesKARUn01G0186070"/>
</dbReference>
<dbReference type="EnsemblPlants" id="TraesKARUn01G0186580.1">
    <property type="protein sequence ID" value="cds.TraesKARUn01G0186580.1"/>
    <property type="gene ID" value="TraesKARUn01G0186580"/>
</dbReference>
<dbReference type="EnsemblPlants" id="TraesKARUn01G0186680.1">
    <property type="protein sequence ID" value="cds.TraesKARUn01G0186680.1"/>
    <property type="gene ID" value="TraesKARUn01G0186680"/>
</dbReference>
<dbReference type="EnsemblPlants" id="TraesKARUn01G0186750.1">
    <property type="protein sequence ID" value="cds.TraesKARUn01G0186750.1"/>
    <property type="gene ID" value="TraesKARUn01G0186750"/>
</dbReference>
<dbReference type="EnsemblPlants" id="TraesKARUn01G0187710.1">
    <property type="protein sequence ID" value="cds.TraesKARUn01G0187710.1"/>
    <property type="gene ID" value="TraesKARUn01G0187710"/>
</dbReference>
<dbReference type="EnsemblPlants" id="TraesKARUn01G0188100.1">
    <property type="protein sequence ID" value="cds.TraesKARUn01G0188100.1"/>
    <property type="gene ID" value="TraesKARUn01G0188100"/>
</dbReference>
<dbReference type="EnsemblPlants" id="TraesKARUn01G0188400.1">
    <property type="protein sequence ID" value="cds.TraesKARUn01G0188400.1"/>
    <property type="gene ID" value="TraesKARUn01G0188400"/>
</dbReference>
<dbReference type="EnsemblPlants" id="TraesKARUn01G0189930.1">
    <property type="protein sequence ID" value="cds.TraesKARUn01G0189930.1"/>
    <property type="gene ID" value="TraesKARUn01G0189930"/>
</dbReference>
<dbReference type="EnsemblPlants" id="TraesKARUn01G0190660.1">
    <property type="protein sequence ID" value="cds.TraesKARUn01G0190660.1"/>
    <property type="gene ID" value="TraesKARUn01G0190660"/>
</dbReference>
<dbReference type="EnsemblPlants" id="TraesKARUn01G0191900.1">
    <property type="protein sequence ID" value="cds.TraesKARUn01G0191900.1"/>
    <property type="gene ID" value="TraesKARUn01G0191900"/>
</dbReference>
<dbReference type="EnsemblPlants" id="TraesKARUn01G0192320.1">
    <property type="protein sequence ID" value="cds.TraesKARUn01G0192320.1"/>
    <property type="gene ID" value="TraesKARUn01G0192320"/>
</dbReference>
<dbReference type="EnsemblPlants" id="TraesKARUn01G0194080.1">
    <property type="protein sequence ID" value="cds.TraesKARUn01G0194080.1"/>
    <property type="gene ID" value="TraesKARUn01G0194080"/>
</dbReference>
<dbReference type="EnsemblPlants" id="TraesPARA_EIv1.0_2055170.1">
    <property type="protein sequence ID" value="TraesPARA_EIv1.0_2055170.1.CDS1"/>
    <property type="gene ID" value="TraesPARA_EIv1.0_2055170"/>
</dbReference>
<dbReference type="EnsemblPlants" id="TraesPARA_EIv1.0_2055740.1">
    <property type="protein sequence ID" value="TraesPARA_EIv1.0_2055740.1.CDS1"/>
    <property type="gene ID" value="TraesPARA_EIv1.0_2055740"/>
</dbReference>
<dbReference type="EnsemblPlants" id="TraesPARA_EIv1.0_2643670.1">
    <property type="protein sequence ID" value="TraesPARA_EIv1.0_2643670.1.CDS1"/>
    <property type="gene ID" value="TraesPARA_EIv1.0_2643670"/>
</dbReference>
<dbReference type="EnsemblPlants" id="TraesPARA_EIv1.0_2644020.1">
    <property type="protein sequence ID" value="TraesPARA_EIv1.0_2644020.1.CDS1"/>
    <property type="gene ID" value="TraesPARA_EIv1.0_2644020"/>
</dbReference>
<dbReference type="EnsemblPlants" id="TraesPARA_EIv1.0_2644250.1">
    <property type="protein sequence ID" value="TraesPARA_EIv1.0_2644250.1.CDS1"/>
    <property type="gene ID" value="TraesPARA_EIv1.0_2644250"/>
</dbReference>
<dbReference type="EnsemblPlants" id="TraesPARA_EIv1.0_2644400.1">
    <property type="protein sequence ID" value="TraesPARA_EIv1.0_2644400.1.CDS1"/>
    <property type="gene ID" value="TraesPARA_EIv1.0_2644400"/>
</dbReference>
<dbReference type="EnsemblPlants" id="TraesPARA_EIv1.0_2644570.1">
    <property type="protein sequence ID" value="TraesPARA_EIv1.0_2644570.1.CDS1"/>
    <property type="gene ID" value="TraesPARA_EIv1.0_2644570"/>
</dbReference>
<dbReference type="EnsemblPlants" id="TraesPARA_EIv1.0_2645640.1">
    <property type="protein sequence ID" value="TraesPARA_EIv1.0_2645640.1.CDS1"/>
    <property type="gene ID" value="TraesPARA_EIv1.0_2645640"/>
</dbReference>
<dbReference type="EnsemblPlants" id="TraesPARA_EIv1.0_2645680.1">
    <property type="protein sequence ID" value="TraesPARA_EIv1.0_2645680.1.CDS1"/>
    <property type="gene ID" value="TraesPARA_EIv1.0_2645680"/>
</dbReference>
<dbReference type="EnsemblPlants" id="TraesPARA_EIv1.0_2645950.1">
    <property type="protein sequence ID" value="TraesPARA_EIv1.0_2645950.1.CDS1"/>
    <property type="gene ID" value="TraesPARA_EIv1.0_2645950"/>
</dbReference>
<dbReference type="EnsemblPlants" id="TraesPARA_EIv1.0_2646290.1">
    <property type="protein sequence ID" value="TraesPARA_EIv1.0_2646290.1.CDS1"/>
    <property type="gene ID" value="TraesPARA_EIv1.0_2646290"/>
</dbReference>
<dbReference type="EnsemblPlants" id="TraesPARA_EIv1.0_2646490.1">
    <property type="protein sequence ID" value="TraesPARA_EIv1.0_2646490.1.CDS1"/>
    <property type="gene ID" value="TraesPARA_EIv1.0_2646490"/>
</dbReference>
<dbReference type="EnsemblPlants" id="TraesPARA_EIv1.0_2646860.1">
    <property type="protein sequence ID" value="TraesPARA_EIv1.0_2646860.1.CDS1"/>
    <property type="gene ID" value="TraesPARA_EIv1.0_2646860"/>
</dbReference>
<dbReference type="EnsemblPlants" id="TraesPARA_EIv1.0_2646990.1">
    <property type="protein sequence ID" value="TraesPARA_EIv1.0_2646990.1.CDS1"/>
    <property type="gene ID" value="TraesPARA_EIv1.0_2646990"/>
</dbReference>
<dbReference type="EnsemblPlants" id="TraesPARA_EIv1.0_2647580.1">
    <property type="protein sequence ID" value="TraesPARA_EIv1.0_2647580.1.CDS1"/>
    <property type="gene ID" value="TraesPARA_EIv1.0_2647580"/>
</dbReference>
<dbReference type="EnsemblPlants" id="TraesPARA_EIv1.0_2647940.1">
    <property type="protein sequence ID" value="TraesPARA_EIv1.0_2647940.1.CDS1"/>
    <property type="gene ID" value="TraesPARA_EIv1.0_2647940"/>
</dbReference>
<dbReference type="EnsemblPlants" id="TraesPARA_EIv1.0_2648610.1">
    <property type="protein sequence ID" value="TraesPARA_EIv1.0_2648610.1.CDS1"/>
    <property type="gene ID" value="TraesPARA_EIv1.0_2648610"/>
</dbReference>
<dbReference type="EnsemblPlants" id="TraesPARA_EIv1.0_2648890.1">
    <property type="protein sequence ID" value="TraesPARA_EIv1.0_2648890.1.CDS1"/>
    <property type="gene ID" value="TraesPARA_EIv1.0_2648890"/>
</dbReference>
<dbReference type="EnsemblPlants" id="TraesPARA_EIv1.0_2648920.1">
    <property type="protein sequence ID" value="TraesPARA_EIv1.0_2648920.1.CDS1"/>
    <property type="gene ID" value="TraesPARA_EIv1.0_2648920"/>
</dbReference>
<dbReference type="EnsemblPlants" id="TraesPARA_EIv1.0_2649040.1">
    <property type="protein sequence ID" value="TraesPARA_EIv1.0_2649040.1.CDS1"/>
    <property type="gene ID" value="TraesPARA_EIv1.0_2649040"/>
</dbReference>
<dbReference type="EnsemblPlants" id="TraesPARA_EIv1.0_2649450.1">
    <property type="protein sequence ID" value="TraesPARA_EIv1.0_2649450.1.CDS1"/>
    <property type="gene ID" value="TraesPARA_EIv1.0_2649450"/>
</dbReference>
<dbReference type="EnsemblPlants" id="TraesPARA_EIv1.0_2649560.1">
    <property type="protein sequence ID" value="TraesPARA_EIv1.0_2649560.1.CDS1"/>
    <property type="gene ID" value="TraesPARA_EIv1.0_2649560"/>
</dbReference>
<dbReference type="EnsemblPlants" id="TraesPARA_EIv1.0_2649680.1">
    <property type="protein sequence ID" value="TraesPARA_EIv1.0_2649680.1.CDS1"/>
    <property type="gene ID" value="TraesPARA_EIv1.0_2649680"/>
</dbReference>
<dbReference type="EnsemblPlants" id="TraesPARA_EIv1.0_2649950.1">
    <property type="protein sequence ID" value="TraesPARA_EIv1.0_2649950.1.CDS1"/>
    <property type="gene ID" value="TraesPARA_EIv1.0_2649950"/>
</dbReference>
<dbReference type="EnsemblPlants" id="TraesPARA_EIv1.0_2650110.1">
    <property type="protein sequence ID" value="TraesPARA_EIv1.0_2650110.1.CDS1"/>
    <property type="gene ID" value="TraesPARA_EIv1.0_2650110"/>
</dbReference>
<dbReference type="EnsemblPlants" id="TraesPARA_EIv1.0_2650180.1">
    <property type="protein sequence ID" value="TraesPARA_EIv1.0_2650180.1.CDS1"/>
    <property type="gene ID" value="TraesPARA_EIv1.0_2650180"/>
</dbReference>
<dbReference type="EnsemblPlants" id="TraesPARA_EIv1.0_2650650.1">
    <property type="protein sequence ID" value="TraesPARA_EIv1.0_2650650.1.CDS1"/>
    <property type="gene ID" value="TraesPARA_EIv1.0_2650650"/>
</dbReference>
<dbReference type="EnsemblPlants" id="TraesPARA_EIv1.0_2651250.1">
    <property type="protein sequence ID" value="TraesPARA_EIv1.0_2651250.1.CDS1"/>
    <property type="gene ID" value="TraesPARA_EIv1.0_2651250"/>
</dbReference>
<dbReference type="EnsemblPlants" id="TraesPARA_EIv1.0_2651410.1">
    <property type="protein sequence ID" value="TraesPARA_EIv1.0_2651410.1.CDS1"/>
    <property type="gene ID" value="TraesPARA_EIv1.0_2651410"/>
</dbReference>
<dbReference type="EnsemblPlants" id="TraesPARA_EIv1.0_2652100.1">
    <property type="protein sequence ID" value="TraesPARA_EIv1.0_2652100.1.CDS1"/>
    <property type="gene ID" value="TraesPARA_EIv1.0_2652100"/>
</dbReference>
<dbReference type="EnsemblPlants" id="TraesPARA_EIv1.0_2652550.1">
    <property type="protein sequence ID" value="TraesPARA_EIv1.0_2652550.1.CDS1"/>
    <property type="gene ID" value="TraesPARA_EIv1.0_2652550"/>
</dbReference>
<dbReference type="EnsemblPlants" id="TraesPARA_EIv1.0_2652910.1">
    <property type="protein sequence ID" value="TraesPARA_EIv1.0_2652910.1.CDS1"/>
    <property type="gene ID" value="TraesPARA_EIv1.0_2652910"/>
</dbReference>
<dbReference type="EnsemblPlants" id="TraesPARA_EIv1.0_2653060.1">
    <property type="protein sequence ID" value="TraesPARA_EIv1.0_2653060.1.CDS1"/>
    <property type="gene ID" value="TraesPARA_EIv1.0_2653060"/>
</dbReference>
<dbReference type="EnsemblPlants" id="TraesPARA_EIv1.0_2653420.1">
    <property type="protein sequence ID" value="TraesPARA_EIv1.0_2653420.1.CDS1"/>
    <property type="gene ID" value="TraesPARA_EIv1.0_2653420"/>
</dbReference>
<dbReference type="EnsemblPlants" id="TraesPARA_EIv1.0_2653850.1">
    <property type="protein sequence ID" value="TraesPARA_EIv1.0_2653850.1.CDS1"/>
    <property type="gene ID" value="TraesPARA_EIv1.0_2653850"/>
</dbReference>
<dbReference type="EnsemblPlants" id="TraesPARA_EIv1.0_2654270.1">
    <property type="protein sequence ID" value="TraesPARA_EIv1.0_2654270.1.CDS1"/>
    <property type="gene ID" value="TraesPARA_EIv1.0_2654270"/>
</dbReference>
<dbReference type="EnsemblPlants" id="TraesPARA_EIv1.0_2654450.1">
    <property type="protein sequence ID" value="TraesPARA_EIv1.0_2654450.1.CDS1"/>
    <property type="gene ID" value="TraesPARA_EIv1.0_2654450"/>
</dbReference>
<dbReference type="EnsemblPlants" id="TraesPARA_EIv1.0_2654520.1">
    <property type="protein sequence ID" value="TraesPARA_EIv1.0_2654520.1.CDS1"/>
    <property type="gene ID" value="TraesPARA_EIv1.0_2654520"/>
</dbReference>
<dbReference type="EnsemblPlants" id="TraesPARA_EIv1.0_2654820.1">
    <property type="protein sequence ID" value="TraesPARA_EIv1.0_2654820.1.CDS1"/>
    <property type="gene ID" value="TraesPARA_EIv1.0_2654820"/>
</dbReference>
<dbReference type="EnsemblPlants" id="TraesPARA_EIv1.0_2654830.1">
    <property type="protein sequence ID" value="TraesPARA_EIv1.0_2654830.1.CDS1"/>
    <property type="gene ID" value="TraesPARA_EIv1.0_2654830"/>
</dbReference>
<dbReference type="EnsemblPlants" id="TraesPARA_EIv1.0_2655150.1">
    <property type="protein sequence ID" value="TraesPARA_EIv1.0_2655150.1.CDS1"/>
    <property type="gene ID" value="TraesPARA_EIv1.0_2655150"/>
</dbReference>
<dbReference type="EnsemblPlants" id="TraesPARA_EIv1.0_2655270.1">
    <property type="protein sequence ID" value="TraesPARA_EIv1.0_2655270.1.CDS1"/>
    <property type="gene ID" value="TraesPARA_EIv1.0_2655270"/>
</dbReference>
<dbReference type="EnsemblPlants" id="TraesPARA_EIv1.0_2655330.1">
    <property type="protein sequence ID" value="TraesPARA_EIv1.0_2655330.1.CDS1"/>
    <property type="gene ID" value="TraesPARA_EIv1.0_2655330"/>
</dbReference>
<dbReference type="EnsemblPlants" id="TraesPARA_EIv1.0_2655560.1">
    <property type="protein sequence ID" value="TraesPARA_EIv1.0_2655560.1.CDS1"/>
    <property type="gene ID" value="TraesPARA_EIv1.0_2655560"/>
</dbReference>
<dbReference type="EnsemblPlants" id="TraesPARA_EIv1.0_2655760.1">
    <property type="protein sequence ID" value="TraesPARA_EIv1.0_2655760.1.CDS1"/>
    <property type="gene ID" value="TraesPARA_EIv1.0_2655760"/>
</dbReference>
<dbReference type="EnsemblPlants" id="TraesPARA_EIv1.0_2656050.1">
    <property type="protein sequence ID" value="TraesPARA_EIv1.0_2656050.1.CDS1"/>
    <property type="gene ID" value="TraesPARA_EIv1.0_2656050"/>
</dbReference>
<dbReference type="EnsemblPlants" id="TraesPARA_EIv1.0_2656460.1">
    <property type="protein sequence ID" value="TraesPARA_EIv1.0_2656460.1.CDS1"/>
    <property type="gene ID" value="TraesPARA_EIv1.0_2656460"/>
</dbReference>
<dbReference type="EnsemblPlants" id="TraesPARA_EIv1.0_2656480.1">
    <property type="protein sequence ID" value="TraesPARA_EIv1.0_2656480.1.CDS1"/>
    <property type="gene ID" value="TraesPARA_EIv1.0_2656480"/>
</dbReference>
<dbReference type="EnsemblPlants" id="TraesPARA_EIv1.0_2656750.1">
    <property type="protein sequence ID" value="TraesPARA_EIv1.0_2656750.1.CDS1"/>
    <property type="gene ID" value="TraesPARA_EIv1.0_2656750"/>
</dbReference>
<dbReference type="EnsemblPlants" id="TraesPARA_EIv1.0_2656790.1">
    <property type="protein sequence ID" value="TraesPARA_EIv1.0_2656790.1.CDS1"/>
    <property type="gene ID" value="TraesPARA_EIv1.0_2656790"/>
</dbReference>
<dbReference type="EnsemblPlants" id="TraesPARA_EIv1.0_2657180.1">
    <property type="protein sequence ID" value="TraesPARA_EIv1.0_2657180.1.CDS1"/>
    <property type="gene ID" value="TraesPARA_EIv1.0_2657180"/>
</dbReference>
<dbReference type="EnsemblPlants" id="TraesPARA_EIv1.0_2658080.1">
    <property type="protein sequence ID" value="TraesPARA_EIv1.0_2658080.1.CDS1"/>
    <property type="gene ID" value="TraesPARA_EIv1.0_2658080"/>
</dbReference>
<dbReference type="EnsemblPlants" id="TraesPARA_EIv1.0_2658400.1">
    <property type="protein sequence ID" value="TraesPARA_EIv1.0_2658400.1.CDS1"/>
    <property type="gene ID" value="TraesPARA_EIv1.0_2658400"/>
</dbReference>
<dbReference type="EnsemblPlants" id="TraesPARA_EIv1.0_2660100.1">
    <property type="protein sequence ID" value="TraesPARA_EIv1.0_2660100.1.CDS1"/>
    <property type="gene ID" value="TraesPARA_EIv1.0_2660100"/>
</dbReference>
<dbReference type="EnsemblPlants" id="TraesPARA_EIv1.0_2660260.1">
    <property type="protein sequence ID" value="TraesPARA_EIv1.0_2660260.1.CDS1"/>
    <property type="gene ID" value="TraesPARA_EIv1.0_2660260"/>
</dbReference>
<dbReference type="EnsemblPlants" id="TraesPARA_EIv1.0_2662830.1">
    <property type="protein sequence ID" value="TraesPARA_EIv1.0_2662830.1.CDS1"/>
    <property type="gene ID" value="TraesPARA_EIv1.0_2662830"/>
</dbReference>
<dbReference type="EnsemblPlants" id="TraesPARA_EIv1.0_2663010.1">
    <property type="protein sequence ID" value="TraesPARA_EIv1.0_2663010.1.CDS1"/>
    <property type="gene ID" value="TraesPARA_EIv1.0_2663010"/>
</dbReference>
<dbReference type="EnsemblPlants" id="TraesPARA_EIv1.0_2663290.1">
    <property type="protein sequence ID" value="TraesPARA_EIv1.0_2663290.1.CDS1"/>
    <property type="gene ID" value="TraesPARA_EIv1.0_2663290"/>
</dbReference>
<dbReference type="EnsemblPlants" id="TraesPARA_EIv1.0_2663580.1">
    <property type="protein sequence ID" value="TraesPARA_EIv1.0_2663580.1.CDS1"/>
    <property type="gene ID" value="TraesPARA_EIv1.0_2663580"/>
</dbReference>
<dbReference type="EnsemblPlants" id="TraesPARA_EIv1.0_2663750.1">
    <property type="protein sequence ID" value="TraesPARA_EIv1.0_2663750.1.CDS1"/>
    <property type="gene ID" value="TraesPARA_EIv1.0_2663750"/>
</dbReference>
<dbReference type="EnsemblPlants" id="TraesPARA_EIv1.0_2665600.1">
    <property type="protein sequence ID" value="TraesPARA_EIv1.0_2665600.1.CDS1"/>
    <property type="gene ID" value="TraesPARA_EIv1.0_2665600"/>
</dbReference>
<dbReference type="EnsemblPlants" id="TraesPARA_EIv1.0_2665710.1">
    <property type="protein sequence ID" value="TraesPARA_EIv1.0_2665710.1.CDS1"/>
    <property type="gene ID" value="TraesPARA_EIv1.0_2665710"/>
</dbReference>
<dbReference type="EnsemblPlants" id="TraesPARA_EIv1.0_2666260.1">
    <property type="protein sequence ID" value="TraesPARA_EIv1.0_2666260.1.CDS1"/>
    <property type="gene ID" value="TraesPARA_EIv1.0_2666260"/>
</dbReference>
<dbReference type="EnsemblPlants" id="TraesPARA_EIv1.0_2666890.1">
    <property type="protein sequence ID" value="TraesPARA_EIv1.0_2666890.1.CDS1"/>
    <property type="gene ID" value="TraesPARA_EIv1.0_2666890"/>
</dbReference>
<dbReference type="EnsemblPlants" id="TraesPARA_EIv1.0_2667160.1">
    <property type="protein sequence ID" value="TraesPARA_EIv1.0_2667160.1.CDS1"/>
    <property type="gene ID" value="TraesPARA_EIv1.0_2667160"/>
</dbReference>
<dbReference type="EnsemblPlants" id="TraesPARA_EIv1.0_2667220.1">
    <property type="protein sequence ID" value="TraesPARA_EIv1.0_2667220.1.CDS1"/>
    <property type="gene ID" value="TraesPARA_EIv1.0_2667220"/>
</dbReference>
<dbReference type="EnsemblPlants" id="TraesPARA_EIv1.0_2667260.1">
    <property type="protein sequence ID" value="TraesPARA_EIv1.0_2667260.1.CDS1"/>
    <property type="gene ID" value="TraesPARA_EIv1.0_2667260"/>
</dbReference>
<dbReference type="EnsemblPlants" id="TraesPARA_EIv1.0_2667970.1">
    <property type="protein sequence ID" value="TraesPARA_EIv1.0_2667970.1.CDS1"/>
    <property type="gene ID" value="TraesPARA_EIv1.0_2667970"/>
</dbReference>
<dbReference type="EnsemblPlants" id="TraesPARA_EIv1.0_2668000.1">
    <property type="protein sequence ID" value="TraesPARA_EIv1.0_2668000.1.CDS1"/>
    <property type="gene ID" value="TraesPARA_EIv1.0_2668000"/>
</dbReference>
<dbReference type="EnsemblPlants" id="TraesPARA_EIv1.0_2668230.1">
    <property type="protein sequence ID" value="TraesPARA_EIv1.0_2668230.1.CDS1"/>
    <property type="gene ID" value="TraesPARA_EIv1.0_2668230"/>
</dbReference>
<dbReference type="EnsemblPlants" id="TraesPARA_EIv1.0_2668560.1">
    <property type="protein sequence ID" value="TraesPARA_EIv1.0_2668560.1.CDS1"/>
    <property type="gene ID" value="TraesPARA_EIv1.0_2668560"/>
</dbReference>
<dbReference type="EnsemblPlants" id="TraesPARA_EIv1.0_2668770.1">
    <property type="protein sequence ID" value="TraesPARA_EIv1.0_2668770.1.CDS1"/>
    <property type="gene ID" value="TraesPARA_EIv1.0_2668770"/>
</dbReference>
<dbReference type="EnsemblPlants" id="TraesPARA_EIv1.0_2669600.1">
    <property type="protein sequence ID" value="TraesPARA_EIv1.0_2669600.1.CDS1"/>
    <property type="gene ID" value="TraesPARA_EIv1.0_2669600"/>
</dbReference>
<dbReference type="EnsemblPlants" id="TraesPARA_EIv1.0_2670050.1">
    <property type="protein sequence ID" value="TraesPARA_EIv1.0_2670050.1.CDS1"/>
    <property type="gene ID" value="TraesPARA_EIv1.0_2670050"/>
</dbReference>
<dbReference type="EnsemblPlants" id="TraesPARA_EIv1.0_2670120.1">
    <property type="protein sequence ID" value="TraesPARA_EIv1.0_2670120.1.CDS1"/>
    <property type="gene ID" value="TraesPARA_EIv1.0_2670120"/>
</dbReference>
<dbReference type="EnsemblPlants" id="TraesPARA_EIv1.0_2670220.1">
    <property type="protein sequence ID" value="TraesPARA_EIv1.0_2670220.1.CDS1"/>
    <property type="gene ID" value="TraesPARA_EIv1.0_2670220"/>
</dbReference>
<dbReference type="EnsemblPlants" id="TraesPARA_EIv1.0_2670370.1">
    <property type="protein sequence ID" value="TraesPARA_EIv1.0_2670370.1.CDS1"/>
    <property type="gene ID" value="TraesPARA_EIv1.0_2670370"/>
</dbReference>
<dbReference type="EnsemblPlants" id="TraesPARA_EIv1.0_2671030.1">
    <property type="protein sequence ID" value="TraesPARA_EIv1.0_2671030.1.CDS1"/>
    <property type="gene ID" value="TraesPARA_EIv1.0_2671030"/>
</dbReference>
<dbReference type="EnsemblPlants" id="TraesPARA_EIv1.0_2671040.1">
    <property type="protein sequence ID" value="TraesPARA_EIv1.0_2671040.1.CDS1"/>
    <property type="gene ID" value="TraesPARA_EIv1.0_2671040"/>
</dbReference>
<dbReference type="EnsemblPlants" id="TraesPARA_EIv1.0_2671560.1">
    <property type="protein sequence ID" value="TraesPARA_EIv1.0_2671560.1.CDS1"/>
    <property type="gene ID" value="TraesPARA_EIv1.0_2671560"/>
</dbReference>
<dbReference type="EnsemblPlants" id="TraesPARA_EIv1.0_2671920.1">
    <property type="protein sequence ID" value="TraesPARA_EIv1.0_2671920.1.CDS1"/>
    <property type="gene ID" value="TraesPARA_EIv1.0_2671920"/>
</dbReference>
<dbReference type="EnsemblPlants" id="TraesPARA_EIv1.0_2672770.1">
    <property type="protein sequence ID" value="TraesPARA_EIv1.0_2672770.1.CDS1"/>
    <property type="gene ID" value="TraesPARA_EIv1.0_2672770"/>
</dbReference>
<dbReference type="EnsemblPlants" id="TraesPARA_EIv1.0_2673540.1">
    <property type="protein sequence ID" value="TraesPARA_EIv1.0_2673540.1.CDS1"/>
    <property type="gene ID" value="TraesPARA_EIv1.0_2673540"/>
</dbReference>
<dbReference type="EnsemblPlants" id="TraesPARA_EIv1.0_2673780.1">
    <property type="protein sequence ID" value="TraesPARA_EIv1.0_2673780.1.CDS1"/>
    <property type="gene ID" value="TraesPARA_EIv1.0_2673780"/>
</dbReference>
<dbReference type="EnsemblPlants" id="TraesPARA_EIv1.0_2673820.1">
    <property type="protein sequence ID" value="TraesPARA_EIv1.0_2673820.1.CDS1"/>
    <property type="gene ID" value="TraesPARA_EIv1.0_2673820"/>
</dbReference>
<dbReference type="EnsemblPlants" id="TraesPARA_EIv1.0_2674050.1">
    <property type="protein sequence ID" value="TraesPARA_EIv1.0_2674050.1.CDS1"/>
    <property type="gene ID" value="TraesPARA_EIv1.0_2674050"/>
</dbReference>
<dbReference type="EnsemblPlants" id="TraesPARA_EIv1.0_2674190.1">
    <property type="protein sequence ID" value="TraesPARA_EIv1.0_2674190.1.CDS1"/>
    <property type="gene ID" value="TraesPARA_EIv1.0_2674190"/>
</dbReference>
<dbReference type="EnsemblPlants" id="TraesPARA_EIv1.0_2674410.1">
    <property type="protein sequence ID" value="TraesPARA_EIv1.0_2674410.1.CDS1"/>
    <property type="gene ID" value="TraesPARA_EIv1.0_2674410"/>
</dbReference>
<dbReference type="EnsemblPlants" id="TraesPARA_EIv1.0_2674470.1">
    <property type="protein sequence ID" value="TraesPARA_EIv1.0_2674470.1.CDS1"/>
    <property type="gene ID" value="TraesPARA_EIv1.0_2674470"/>
</dbReference>
<dbReference type="EnsemblPlants" id="TraesPARA_EIv1.0_2674560.1">
    <property type="protein sequence ID" value="TraesPARA_EIv1.0_2674560.1.CDS1"/>
    <property type="gene ID" value="TraesPARA_EIv1.0_2674560"/>
</dbReference>
<dbReference type="EnsemblPlants" id="TraesPARA_EIv1.0_2675290.1">
    <property type="protein sequence ID" value="TraesPARA_EIv1.0_2675290.1.CDS1"/>
    <property type="gene ID" value="TraesPARA_EIv1.0_2675290"/>
</dbReference>
<dbReference type="EnsemblPlants" id="TraesPARA_EIv1.0_2676000.1">
    <property type="protein sequence ID" value="TraesPARA_EIv1.0_2676000.1.CDS1"/>
    <property type="gene ID" value="TraesPARA_EIv1.0_2676000"/>
</dbReference>
<dbReference type="EnsemblPlants" id="TraesPARA_EIv1.0_2676430.1">
    <property type="protein sequence ID" value="TraesPARA_EIv1.0_2676430.1.CDS1"/>
    <property type="gene ID" value="TraesPARA_EIv1.0_2676430"/>
</dbReference>
<dbReference type="EnsemblPlants" id="TraesPARA_EIv1.0_2676650.1">
    <property type="protein sequence ID" value="TraesPARA_EIv1.0_2676650.1.CDS1"/>
    <property type="gene ID" value="TraesPARA_EIv1.0_2676650"/>
</dbReference>
<dbReference type="EnsemblPlants" id="TraesPARA_EIv1.0_2677040.1">
    <property type="protein sequence ID" value="TraesPARA_EIv1.0_2677040.1.CDS1"/>
    <property type="gene ID" value="TraesPARA_EIv1.0_2677040"/>
</dbReference>
<dbReference type="EnsemblPlants" id="TraesPARA_EIv1.0_2677070.1">
    <property type="protein sequence ID" value="TraesPARA_EIv1.0_2677070.1.CDS1"/>
    <property type="gene ID" value="TraesPARA_EIv1.0_2677070"/>
</dbReference>
<dbReference type="EnsemblPlants" id="TraesPARA_EIv1.0_2677140.1">
    <property type="protein sequence ID" value="TraesPARA_EIv1.0_2677140.1.CDS1"/>
    <property type="gene ID" value="TraesPARA_EIv1.0_2677140"/>
</dbReference>
<dbReference type="EnsemblPlants" id="TraesPARA_EIv1.0_2678330.1">
    <property type="protein sequence ID" value="TraesPARA_EIv1.0_2678330.1.CDS1"/>
    <property type="gene ID" value="TraesPARA_EIv1.0_2678330"/>
</dbReference>
<dbReference type="EnsemblPlants" id="TraesPARA_EIv1.0_2679670.1">
    <property type="protein sequence ID" value="TraesPARA_EIv1.0_2679670.1.CDS1"/>
    <property type="gene ID" value="TraesPARA_EIv1.0_2679670"/>
</dbReference>
<dbReference type="EnsemblPlants" id="TraesPARA_EIv1.0_2680000.1">
    <property type="protein sequence ID" value="TraesPARA_EIv1.0_2680000.1.CDS1"/>
    <property type="gene ID" value="TraesPARA_EIv1.0_2680000"/>
</dbReference>
<dbReference type="EnsemblPlants" id="TraesPARA_EIv1.0_2681010.1">
    <property type="protein sequence ID" value="TraesPARA_EIv1.0_2681010.1.CDS1"/>
    <property type="gene ID" value="TraesPARA_EIv1.0_2681010"/>
</dbReference>
<dbReference type="EnsemblPlants" id="TraesPARA_EIv1.0_2681230.1">
    <property type="protein sequence ID" value="TraesPARA_EIv1.0_2681230.1.CDS1"/>
    <property type="gene ID" value="TraesPARA_EIv1.0_2681230"/>
</dbReference>
<dbReference type="EnsemblPlants" id="TraesPARA_EIv1.0_2681320.1">
    <property type="protein sequence ID" value="TraesPARA_EIv1.0_2681320.1.CDS1"/>
    <property type="gene ID" value="TraesPARA_EIv1.0_2681320"/>
</dbReference>
<dbReference type="EnsemblPlants" id="TraesPARA_EIv1.0_2681540.1">
    <property type="protein sequence ID" value="TraesPARA_EIv1.0_2681540.1.CDS1"/>
    <property type="gene ID" value="TraesPARA_EIv1.0_2681540"/>
</dbReference>
<dbReference type="EnsemblPlants" id="TraesPARA_EIv1.0_2681670.1">
    <property type="protein sequence ID" value="TraesPARA_EIv1.0_2681670.1.CDS1"/>
    <property type="gene ID" value="TraesPARA_EIv1.0_2681670"/>
</dbReference>
<dbReference type="GeneID" id="803183"/>
<dbReference type="Gramene" id="TraesKARUn01G0026190.1">
    <property type="protein sequence ID" value="cds.TraesKARUn01G0026190.1"/>
    <property type="gene ID" value="TraesKARUn01G0026190"/>
</dbReference>
<dbReference type="Gramene" id="TraesKARUn01G0026820.1">
    <property type="protein sequence ID" value="cds.TraesKARUn01G0026820.1"/>
    <property type="gene ID" value="TraesKARUn01G0026820"/>
</dbReference>
<dbReference type="Gramene" id="TraesKARUn01G0027700.1">
    <property type="protein sequence ID" value="cds.TraesKARUn01G0027700.1"/>
    <property type="gene ID" value="TraesKARUn01G0027700"/>
</dbReference>
<dbReference type="Gramene" id="TraesKARUn01G0029970.1">
    <property type="protein sequence ID" value="cds.TraesKARUn01G0029970.1"/>
    <property type="gene ID" value="TraesKARUn01G0029970"/>
</dbReference>
<dbReference type="Gramene" id="TraesKARUn01G0030260.1">
    <property type="protein sequence ID" value="cds.TraesKARUn01G0030260.1"/>
    <property type="gene ID" value="TraesKARUn01G0030260"/>
</dbReference>
<dbReference type="Gramene" id="TraesKARUn01G0031480.1">
    <property type="protein sequence ID" value="cds.TraesKARUn01G0031480.1"/>
    <property type="gene ID" value="TraesKARUn01G0031480"/>
</dbReference>
<dbReference type="Gramene" id="TraesKARUn01G0031750.1">
    <property type="protein sequence ID" value="cds.TraesKARUn01G0031750.1"/>
    <property type="gene ID" value="TraesKARUn01G0031750"/>
</dbReference>
<dbReference type="Gramene" id="TraesKARUn01G0035040.1">
    <property type="protein sequence ID" value="cds.TraesKARUn01G0035040.1"/>
    <property type="gene ID" value="TraesKARUn01G0035040"/>
</dbReference>
<dbReference type="Gramene" id="TraesKARUn01G0036960.1">
    <property type="protein sequence ID" value="cds.TraesKARUn01G0036960.1"/>
    <property type="gene ID" value="TraesKARUn01G0036960"/>
</dbReference>
<dbReference type="Gramene" id="TraesKARUn01G0057910.1">
    <property type="protein sequence ID" value="cds.TraesKARUn01G0057910.1"/>
    <property type="gene ID" value="TraesKARUn01G0057910"/>
</dbReference>
<dbReference type="Gramene" id="TraesKARUn01G0060130.1">
    <property type="protein sequence ID" value="cds.TraesKARUn01G0060130.1"/>
    <property type="gene ID" value="TraesKARUn01G0060130"/>
</dbReference>
<dbReference type="Gramene" id="TraesKARUn01G0060230.1">
    <property type="protein sequence ID" value="cds.TraesKARUn01G0060230.1"/>
    <property type="gene ID" value="TraesKARUn01G0060230"/>
</dbReference>
<dbReference type="Gramene" id="TraesKARUn01G0060350.1">
    <property type="protein sequence ID" value="cds.TraesKARUn01G0060350.1"/>
    <property type="gene ID" value="TraesKARUn01G0060350"/>
</dbReference>
<dbReference type="Gramene" id="TraesKARUn01G0066030.1">
    <property type="protein sequence ID" value="cds.TraesKARUn01G0066030.1"/>
    <property type="gene ID" value="TraesKARUn01G0066030"/>
</dbReference>
<dbReference type="Gramene" id="TraesKARUn01G0066160.1">
    <property type="protein sequence ID" value="cds.TraesKARUn01G0066160.1"/>
    <property type="gene ID" value="TraesKARUn01G0066160"/>
</dbReference>
<dbReference type="Gramene" id="TraesKARUn01G0069820.1">
    <property type="protein sequence ID" value="cds.TraesKARUn01G0069820.1"/>
    <property type="gene ID" value="TraesKARUn01G0069820"/>
</dbReference>
<dbReference type="Gramene" id="TraesKARUn01G0070460.1">
    <property type="protein sequence ID" value="cds.TraesKARUn01G0070460.1"/>
    <property type="gene ID" value="TraesKARUn01G0070460"/>
</dbReference>
<dbReference type="Gramene" id="TraesKARUn01G0070500.1">
    <property type="protein sequence ID" value="cds.TraesKARUn01G0070500.1"/>
    <property type="gene ID" value="TraesKARUn01G0070500"/>
</dbReference>
<dbReference type="Gramene" id="TraesKARUn01G0071180.1">
    <property type="protein sequence ID" value="cds.TraesKARUn01G0071180.1"/>
    <property type="gene ID" value="TraesKARUn01G0071180"/>
</dbReference>
<dbReference type="Gramene" id="TraesKARUn01G0071240.1">
    <property type="protein sequence ID" value="cds.TraesKARUn01G0071240.1"/>
    <property type="gene ID" value="TraesKARUn01G0071240"/>
</dbReference>
<dbReference type="Gramene" id="TraesKARUn01G0071760.1">
    <property type="protein sequence ID" value="cds.TraesKARUn01G0071760.1"/>
    <property type="gene ID" value="TraesKARUn01G0071760"/>
</dbReference>
<dbReference type="Gramene" id="TraesKARUn01G0071990.1">
    <property type="protein sequence ID" value="cds.TraesKARUn01G0071990.1"/>
    <property type="gene ID" value="TraesKARUn01G0071990"/>
</dbReference>
<dbReference type="Gramene" id="TraesKARUn01G0072490.1">
    <property type="protein sequence ID" value="cds.TraesKARUn01G0072490.1"/>
    <property type="gene ID" value="TraesKARUn01G0072490"/>
</dbReference>
<dbReference type="Gramene" id="TraesKARUn01G0072860.1">
    <property type="protein sequence ID" value="cds.TraesKARUn01G0072860.1"/>
    <property type="gene ID" value="TraesKARUn01G0072860"/>
</dbReference>
<dbReference type="Gramene" id="TraesKARUn01G0073170.1">
    <property type="protein sequence ID" value="cds.TraesKARUn01G0073170.1"/>
    <property type="gene ID" value="TraesKARUn01G0073170"/>
</dbReference>
<dbReference type="Gramene" id="TraesKARUn01G0074480.1">
    <property type="protein sequence ID" value="cds.TraesKARUn01G0074480.1"/>
    <property type="gene ID" value="TraesKARUn01G0074480"/>
</dbReference>
<dbReference type="Gramene" id="TraesKARUn01G0074600.1">
    <property type="protein sequence ID" value="cds.TraesKARUn01G0074600.1"/>
    <property type="gene ID" value="TraesKARUn01G0074600"/>
</dbReference>
<dbReference type="Gramene" id="TraesKARUn01G0075070.1">
    <property type="protein sequence ID" value="cds.TraesKARUn01G0075070.1"/>
    <property type="gene ID" value="TraesKARUn01G0075070"/>
</dbReference>
<dbReference type="Gramene" id="TraesKARUn01G0078350.1">
    <property type="protein sequence ID" value="cds.TraesKARUn01G0078350.1"/>
    <property type="gene ID" value="TraesKARUn01G0078350"/>
</dbReference>
<dbReference type="Gramene" id="TraesKARUn01G0078540.1">
    <property type="protein sequence ID" value="cds.TraesKARUn01G0078540.1"/>
    <property type="gene ID" value="TraesKARUn01G0078540"/>
</dbReference>
<dbReference type="Gramene" id="TraesKARUn01G0078770.1">
    <property type="protein sequence ID" value="cds.TraesKARUn01G0078770.1"/>
    <property type="gene ID" value="TraesKARUn01G0078770"/>
</dbReference>
<dbReference type="Gramene" id="TraesKARUn01G0078820.1">
    <property type="protein sequence ID" value="cds.TraesKARUn01G0078820.1"/>
    <property type="gene ID" value="TraesKARUn01G0078820"/>
</dbReference>
<dbReference type="Gramene" id="TraesKARUn01G0079380.1">
    <property type="protein sequence ID" value="cds.TraesKARUn01G0079380.1"/>
    <property type="gene ID" value="TraesKARUn01G0079380"/>
</dbReference>
<dbReference type="Gramene" id="TraesKARUn01G0079410.1">
    <property type="protein sequence ID" value="cds.TraesKARUn01G0079410.1"/>
    <property type="gene ID" value="TraesKARUn01G0079410"/>
</dbReference>
<dbReference type="Gramene" id="TraesKARUn01G0081250.1">
    <property type="protein sequence ID" value="cds.TraesKARUn01G0081250.1"/>
    <property type="gene ID" value="TraesKARUn01G0081250"/>
</dbReference>
<dbReference type="Gramene" id="TraesKARUn01G0081330.1">
    <property type="protein sequence ID" value="cds.TraesKARUn01G0081330.1"/>
    <property type="gene ID" value="TraesKARUn01G0081330"/>
</dbReference>
<dbReference type="Gramene" id="TraesKARUn01G0082150.1">
    <property type="protein sequence ID" value="cds.TraesKARUn01G0082150.1"/>
    <property type="gene ID" value="TraesKARUn01G0082150"/>
</dbReference>
<dbReference type="Gramene" id="TraesKARUn01G0084730.1">
    <property type="protein sequence ID" value="cds.TraesKARUn01G0084730.1"/>
    <property type="gene ID" value="TraesKARUn01G0084730"/>
</dbReference>
<dbReference type="Gramene" id="TraesKARUn01G0085820.1">
    <property type="protein sequence ID" value="cds.TraesKARUn01G0085820.1"/>
    <property type="gene ID" value="TraesKARUn01G0085820"/>
</dbReference>
<dbReference type="Gramene" id="TraesKARUn01G0085910.1">
    <property type="protein sequence ID" value="cds.TraesKARUn01G0085910.1"/>
    <property type="gene ID" value="TraesKARUn01G0085910"/>
</dbReference>
<dbReference type="Gramene" id="TraesKARUn01G0086580.1">
    <property type="protein sequence ID" value="cds.TraesKARUn01G0086580.1"/>
    <property type="gene ID" value="TraesKARUn01G0086580"/>
</dbReference>
<dbReference type="Gramene" id="TraesKARUn01G0087000.1">
    <property type="protein sequence ID" value="cds.TraesKARUn01G0087000.1"/>
    <property type="gene ID" value="TraesKARUn01G0087000"/>
</dbReference>
<dbReference type="Gramene" id="TraesKARUn01G0087350.1">
    <property type="protein sequence ID" value="cds.TraesKARUn01G0087350.1"/>
    <property type="gene ID" value="TraesKARUn01G0087350"/>
</dbReference>
<dbReference type="Gramene" id="TraesKARUn01G0088720.1">
    <property type="protein sequence ID" value="cds.TraesKARUn01G0088720.1"/>
    <property type="gene ID" value="TraesKARUn01G0088720"/>
</dbReference>
<dbReference type="Gramene" id="TraesKARUn01G0089720.1">
    <property type="protein sequence ID" value="cds.TraesKARUn01G0089720.1"/>
    <property type="gene ID" value="TraesKARUn01G0089720"/>
</dbReference>
<dbReference type="Gramene" id="TraesKARUn01G0091430.1">
    <property type="protein sequence ID" value="cds.TraesKARUn01G0091430.1"/>
    <property type="gene ID" value="TraesKARUn01G0091430"/>
</dbReference>
<dbReference type="Gramene" id="TraesKARUn01G0091810.1">
    <property type="protein sequence ID" value="cds.TraesKARUn01G0091810.1"/>
    <property type="gene ID" value="TraesKARUn01G0091810"/>
</dbReference>
<dbReference type="Gramene" id="TraesKARUn01G0092620.1">
    <property type="protein sequence ID" value="cds.TraesKARUn01G0092620.1"/>
    <property type="gene ID" value="TraesKARUn01G0092620"/>
</dbReference>
<dbReference type="Gramene" id="TraesKARUn01G0093200.1">
    <property type="protein sequence ID" value="cds.TraesKARUn01G0093200.1"/>
    <property type="gene ID" value="TraesKARUn01G0093200"/>
</dbReference>
<dbReference type="Gramene" id="TraesKARUn01G0094290.1">
    <property type="protein sequence ID" value="cds.TraesKARUn01G0094290.1"/>
    <property type="gene ID" value="TraesKARUn01G0094290"/>
</dbReference>
<dbReference type="Gramene" id="TraesKARUn01G0094660.1">
    <property type="protein sequence ID" value="cds.TraesKARUn01G0094660.1"/>
    <property type="gene ID" value="TraesKARUn01G0094660"/>
</dbReference>
<dbReference type="Gramene" id="TraesKARUn01G0098030.1">
    <property type="protein sequence ID" value="cds.TraesKARUn01G0098030.1"/>
    <property type="gene ID" value="TraesKARUn01G0098030"/>
</dbReference>
<dbReference type="Gramene" id="TraesKARUn01G0099400.1">
    <property type="protein sequence ID" value="cds.TraesKARUn01G0099400.1"/>
    <property type="gene ID" value="TraesKARUn01G0099400"/>
</dbReference>
<dbReference type="Gramene" id="TraesKARUn01G0099550.1">
    <property type="protein sequence ID" value="cds.TraesKARUn01G0099550.1"/>
    <property type="gene ID" value="TraesKARUn01G0099550"/>
</dbReference>
<dbReference type="Gramene" id="TraesKARUn01G0100410.1">
    <property type="protein sequence ID" value="cds.TraesKARUn01G0100410.1"/>
    <property type="gene ID" value="TraesKARUn01G0100410"/>
</dbReference>
<dbReference type="Gramene" id="TraesKARUn01G0103190.1">
    <property type="protein sequence ID" value="cds.TraesKARUn01G0103190.1"/>
    <property type="gene ID" value="TraesKARUn01G0103190"/>
</dbReference>
<dbReference type="Gramene" id="TraesKARUn01G0103700.1">
    <property type="protein sequence ID" value="cds.TraesKARUn01G0103700.1"/>
    <property type="gene ID" value="TraesKARUn01G0103700"/>
</dbReference>
<dbReference type="Gramene" id="TraesKARUn01G0103750.1">
    <property type="protein sequence ID" value="cds.TraesKARUn01G0103750.1"/>
    <property type="gene ID" value="TraesKARUn01G0103750"/>
</dbReference>
<dbReference type="Gramene" id="TraesKARUn01G0104000.1">
    <property type="protein sequence ID" value="cds.TraesKARUn01G0104000.1"/>
    <property type="gene ID" value="TraesKARUn01G0104000"/>
</dbReference>
<dbReference type="Gramene" id="TraesKARUn01G0104550.1">
    <property type="protein sequence ID" value="cds.TraesKARUn01G0104550.1"/>
    <property type="gene ID" value="TraesKARUn01G0104550"/>
</dbReference>
<dbReference type="Gramene" id="TraesKARUn01G0105410.1">
    <property type="protein sequence ID" value="cds.TraesKARUn01G0105410.1"/>
    <property type="gene ID" value="TraesKARUn01G0105410"/>
</dbReference>
<dbReference type="Gramene" id="TraesKARUn01G0105630.1">
    <property type="protein sequence ID" value="cds.TraesKARUn01G0105630.1"/>
    <property type="gene ID" value="TraesKARUn01G0105630"/>
</dbReference>
<dbReference type="Gramene" id="TraesKARUn01G0108170.1">
    <property type="protein sequence ID" value="cds.TraesKARUn01G0108170.1"/>
    <property type="gene ID" value="TraesKARUn01G0108170"/>
</dbReference>
<dbReference type="Gramene" id="TraesKARUn01G0109580.1">
    <property type="protein sequence ID" value="cds.TraesKARUn01G0109580.1"/>
    <property type="gene ID" value="TraesKARUn01G0109580"/>
</dbReference>
<dbReference type="Gramene" id="TraesKARUn01G0110740.1">
    <property type="protein sequence ID" value="cds.TraesKARUn01G0110740.1"/>
    <property type="gene ID" value="TraesKARUn01G0110740"/>
</dbReference>
<dbReference type="Gramene" id="TraesKARUn01G0110890.1">
    <property type="protein sequence ID" value="cds.TraesKARUn01G0110890.1"/>
    <property type="gene ID" value="TraesKARUn01G0110890"/>
</dbReference>
<dbReference type="Gramene" id="TraesKARUn01G0111070.1">
    <property type="protein sequence ID" value="cds.TraesKARUn01G0111070.1"/>
    <property type="gene ID" value="TraesKARUn01G0111070"/>
</dbReference>
<dbReference type="Gramene" id="TraesKARUn01G0111100.1">
    <property type="protein sequence ID" value="cds.TraesKARUn01G0111100.1"/>
    <property type="gene ID" value="TraesKARUn01G0111100"/>
</dbReference>
<dbReference type="Gramene" id="TraesKARUn01G0115470.1">
    <property type="protein sequence ID" value="cds.TraesKARUn01G0115470.1"/>
    <property type="gene ID" value="TraesKARUn01G0115470"/>
</dbReference>
<dbReference type="Gramene" id="TraesKARUn01G0119780.1">
    <property type="protein sequence ID" value="cds.TraesKARUn01G0119780.1"/>
    <property type="gene ID" value="TraesKARUn01G0119780"/>
</dbReference>
<dbReference type="Gramene" id="TraesKARUn01G0119830.1">
    <property type="protein sequence ID" value="cds.TraesKARUn01G0119830.1"/>
    <property type="gene ID" value="TraesKARUn01G0119830"/>
</dbReference>
<dbReference type="Gramene" id="TraesKARUn01G0120320.1">
    <property type="protein sequence ID" value="cds.TraesKARUn01G0120320.1"/>
    <property type="gene ID" value="TraesKARUn01G0120320"/>
</dbReference>
<dbReference type="Gramene" id="TraesKARUn01G0120540.1">
    <property type="protein sequence ID" value="cds.TraesKARUn01G0120540.1"/>
    <property type="gene ID" value="TraesKARUn01G0120540"/>
</dbReference>
<dbReference type="Gramene" id="TraesKARUn01G0120560.1">
    <property type="protein sequence ID" value="cds.TraesKARUn01G0120560.1"/>
    <property type="gene ID" value="TraesKARUn01G0120560"/>
</dbReference>
<dbReference type="Gramene" id="TraesKARUn01G0120580.1">
    <property type="protein sequence ID" value="cds.TraesKARUn01G0120580.1"/>
    <property type="gene ID" value="TraesKARUn01G0120580"/>
</dbReference>
<dbReference type="Gramene" id="TraesKARUn01G0121050.1">
    <property type="protein sequence ID" value="cds.TraesKARUn01G0121050.1"/>
    <property type="gene ID" value="TraesKARUn01G0121050"/>
</dbReference>
<dbReference type="Gramene" id="TraesKARUn01G0121060.1">
    <property type="protein sequence ID" value="cds.TraesKARUn01G0121060.1"/>
    <property type="gene ID" value="TraesKARUn01G0121060"/>
</dbReference>
<dbReference type="Gramene" id="TraesKARUn01G0121130.1">
    <property type="protein sequence ID" value="cds.TraesKARUn01G0121130.1"/>
    <property type="gene ID" value="TraesKARUn01G0121130"/>
</dbReference>
<dbReference type="Gramene" id="TraesKARUn01G0121310.1">
    <property type="protein sequence ID" value="cds.TraesKARUn01G0121310.1"/>
    <property type="gene ID" value="TraesKARUn01G0121310"/>
</dbReference>
<dbReference type="Gramene" id="TraesKARUn01G0121670.1">
    <property type="protein sequence ID" value="cds.TraesKARUn01G0121670.1"/>
    <property type="gene ID" value="TraesKARUn01G0121670"/>
</dbReference>
<dbReference type="Gramene" id="TraesKARUn01G0122090.1">
    <property type="protein sequence ID" value="cds.TraesKARUn01G0122090.1"/>
    <property type="gene ID" value="TraesKARUn01G0122090"/>
</dbReference>
<dbReference type="Gramene" id="TraesKARUn01G0122490.1">
    <property type="protein sequence ID" value="cds.TraesKARUn01G0122490.1"/>
    <property type="gene ID" value="TraesKARUn01G0122490"/>
</dbReference>
<dbReference type="Gramene" id="TraesKARUn01G0124890.1">
    <property type="protein sequence ID" value="cds.TraesKARUn01G0124890.1"/>
    <property type="gene ID" value="TraesKARUn01G0124890"/>
</dbReference>
<dbReference type="Gramene" id="TraesKARUn01G0124910.1">
    <property type="protein sequence ID" value="cds.TraesKARUn01G0124910.1"/>
    <property type="gene ID" value="TraesKARUn01G0124910"/>
</dbReference>
<dbReference type="Gramene" id="TraesKARUn01G0125110.1">
    <property type="protein sequence ID" value="cds.TraesKARUn01G0125110.1"/>
    <property type="gene ID" value="TraesKARUn01G0125110"/>
</dbReference>
<dbReference type="Gramene" id="TraesKARUn01G0126800.1">
    <property type="protein sequence ID" value="cds.TraesKARUn01G0126800.1"/>
    <property type="gene ID" value="TraesKARUn01G0126800"/>
</dbReference>
<dbReference type="Gramene" id="TraesKARUn01G0126970.1">
    <property type="protein sequence ID" value="cds.TraesKARUn01G0126970.1"/>
    <property type="gene ID" value="TraesKARUn01G0126970"/>
</dbReference>
<dbReference type="Gramene" id="TraesKARUn01G0127610.1">
    <property type="protein sequence ID" value="cds.TraesKARUn01G0127610.1"/>
    <property type="gene ID" value="TraesKARUn01G0127610"/>
</dbReference>
<dbReference type="Gramene" id="TraesKARUn01G0128310.1">
    <property type="protein sequence ID" value="cds.TraesKARUn01G0128310.1"/>
    <property type="gene ID" value="TraesKARUn01G0128310"/>
</dbReference>
<dbReference type="Gramene" id="TraesKARUn01G0129690.1">
    <property type="protein sequence ID" value="cds.TraesKARUn01G0129690.1"/>
    <property type="gene ID" value="TraesKARUn01G0129690"/>
</dbReference>
<dbReference type="Gramene" id="TraesKARUn01G0131130.1">
    <property type="protein sequence ID" value="cds.TraesKARUn01G0131130.1"/>
    <property type="gene ID" value="TraesKARUn01G0131130"/>
</dbReference>
<dbReference type="Gramene" id="TraesKARUn01G0131260.1">
    <property type="protein sequence ID" value="cds.TraesKARUn01G0131260.1"/>
    <property type="gene ID" value="TraesKARUn01G0131260"/>
</dbReference>
<dbReference type="Gramene" id="TraesKARUn01G0131320.1">
    <property type="protein sequence ID" value="cds.TraesKARUn01G0131320.1"/>
    <property type="gene ID" value="TraesKARUn01G0131320"/>
</dbReference>
<dbReference type="Gramene" id="TraesKARUn01G0131450.1">
    <property type="protein sequence ID" value="cds.TraesKARUn01G0131450.1"/>
    <property type="gene ID" value="TraesKARUn01G0131450"/>
</dbReference>
<dbReference type="Gramene" id="TraesKARUn01G0131750.1">
    <property type="protein sequence ID" value="cds.TraesKARUn01G0131750.1"/>
    <property type="gene ID" value="TraesKARUn01G0131750"/>
</dbReference>
<dbReference type="Gramene" id="TraesKARUn01G0131910.1">
    <property type="protein sequence ID" value="cds.TraesKARUn01G0131910.1"/>
    <property type="gene ID" value="TraesKARUn01G0131910"/>
</dbReference>
<dbReference type="Gramene" id="TraesKARUn01G0131920.1">
    <property type="protein sequence ID" value="cds.TraesKARUn01G0131920.1"/>
    <property type="gene ID" value="TraesKARUn01G0131920"/>
</dbReference>
<dbReference type="Gramene" id="TraesKARUn01G0132510.1">
    <property type="protein sequence ID" value="cds.TraesKARUn01G0132510.1"/>
    <property type="gene ID" value="TraesKARUn01G0132510"/>
</dbReference>
<dbReference type="Gramene" id="TraesKARUn01G0132880.1">
    <property type="protein sequence ID" value="cds.TraesKARUn01G0132880.1"/>
    <property type="gene ID" value="TraesKARUn01G0132880"/>
</dbReference>
<dbReference type="Gramene" id="TraesKARUn01G0132990.1">
    <property type="protein sequence ID" value="cds.TraesKARUn01G0132990.1"/>
    <property type="gene ID" value="TraesKARUn01G0132990"/>
</dbReference>
<dbReference type="Gramene" id="TraesKARUn01G0133620.1">
    <property type="protein sequence ID" value="cds.TraesKARUn01G0133620.1"/>
    <property type="gene ID" value="TraesKARUn01G0133620"/>
</dbReference>
<dbReference type="Gramene" id="TraesKARUn01G0134180.1">
    <property type="protein sequence ID" value="cds.TraesKARUn01G0134180.1"/>
    <property type="gene ID" value="TraesKARUn01G0134180"/>
</dbReference>
<dbReference type="Gramene" id="TraesKARUn01G0135610.1">
    <property type="protein sequence ID" value="cds.TraesKARUn01G0135610.1"/>
    <property type="gene ID" value="TraesKARUn01G0135610"/>
</dbReference>
<dbReference type="Gramene" id="TraesKARUn01G0137670.1">
    <property type="protein sequence ID" value="cds.TraesKARUn01G0137670.1"/>
    <property type="gene ID" value="TraesKARUn01G0137670"/>
</dbReference>
<dbReference type="Gramene" id="TraesKARUn01G0138500.1">
    <property type="protein sequence ID" value="cds.TraesKARUn01G0138500.1"/>
    <property type="gene ID" value="TraesKARUn01G0138500"/>
</dbReference>
<dbReference type="Gramene" id="TraesKARUn01G0139520.1">
    <property type="protein sequence ID" value="cds.TraesKARUn01G0139520.1"/>
    <property type="gene ID" value="TraesKARUn01G0139520"/>
</dbReference>
<dbReference type="Gramene" id="TraesKARUn01G0139560.1">
    <property type="protein sequence ID" value="cds.TraesKARUn01G0139560.1"/>
    <property type="gene ID" value="TraesKARUn01G0139560"/>
</dbReference>
<dbReference type="Gramene" id="TraesKARUn01G0140530.1">
    <property type="protein sequence ID" value="cds.TraesKARUn01G0140530.1"/>
    <property type="gene ID" value="TraesKARUn01G0140530"/>
</dbReference>
<dbReference type="Gramene" id="TraesKARUn01G0140860.1">
    <property type="protein sequence ID" value="cds.TraesKARUn01G0140860.1"/>
    <property type="gene ID" value="TraesKARUn01G0140860"/>
</dbReference>
<dbReference type="Gramene" id="TraesKARUn01G0141490.1">
    <property type="protein sequence ID" value="cds.TraesKARUn01G0141490.1"/>
    <property type="gene ID" value="TraesKARUn01G0141490"/>
</dbReference>
<dbReference type="Gramene" id="TraesKARUn01G0145510.1">
    <property type="protein sequence ID" value="cds.TraesKARUn01G0145510.1"/>
    <property type="gene ID" value="TraesKARUn01G0145510"/>
</dbReference>
<dbReference type="Gramene" id="TraesKARUn01G0147120.1">
    <property type="protein sequence ID" value="cds.TraesKARUn01G0147120.1"/>
    <property type="gene ID" value="TraesKARUn01G0147120"/>
</dbReference>
<dbReference type="Gramene" id="TraesKARUn01G0147190.1">
    <property type="protein sequence ID" value="cds.TraesKARUn01G0147190.1"/>
    <property type="gene ID" value="TraesKARUn01G0147190"/>
</dbReference>
<dbReference type="Gramene" id="TraesKARUn01G0150140.1">
    <property type="protein sequence ID" value="cds.TraesKARUn01G0150140.1"/>
    <property type="gene ID" value="TraesKARUn01G0150140"/>
</dbReference>
<dbReference type="Gramene" id="TraesKARUn01G0151450.1">
    <property type="protein sequence ID" value="cds.TraesKARUn01G0151450.1"/>
    <property type="gene ID" value="TraesKARUn01G0151450"/>
</dbReference>
<dbReference type="Gramene" id="TraesKARUn01G0155540.1">
    <property type="protein sequence ID" value="cds.TraesKARUn01G0155540.1"/>
    <property type="gene ID" value="TraesKARUn01G0155540"/>
</dbReference>
<dbReference type="Gramene" id="TraesKARUn01G0155980.1">
    <property type="protein sequence ID" value="cds.TraesKARUn01G0155980.1"/>
    <property type="gene ID" value="TraesKARUn01G0155980"/>
</dbReference>
<dbReference type="Gramene" id="TraesKARUn01G0158860.1">
    <property type="protein sequence ID" value="cds.TraesKARUn01G0158860.1"/>
    <property type="gene ID" value="TraesKARUn01G0158860"/>
</dbReference>
<dbReference type="Gramene" id="TraesKARUn01G0160300.1">
    <property type="protein sequence ID" value="cds.TraesKARUn01G0160300.1"/>
    <property type="gene ID" value="TraesKARUn01G0160300"/>
</dbReference>
<dbReference type="Gramene" id="TraesKARUn01G0165470.1">
    <property type="protein sequence ID" value="cds.TraesKARUn01G0165470.1"/>
    <property type="gene ID" value="TraesKARUn01G0165470"/>
</dbReference>
<dbReference type="Gramene" id="TraesKARUn01G0168960.1">
    <property type="protein sequence ID" value="cds.TraesKARUn01G0168960.1"/>
    <property type="gene ID" value="TraesKARUn01G0168960"/>
</dbReference>
<dbReference type="Gramene" id="TraesKARUn01G0170910.1">
    <property type="protein sequence ID" value="cds.TraesKARUn01G0170910.1"/>
    <property type="gene ID" value="TraesKARUn01G0170910"/>
</dbReference>
<dbReference type="Gramene" id="TraesKARUn01G0171210.1">
    <property type="protein sequence ID" value="cds.TraesKARUn01G0171210.1"/>
    <property type="gene ID" value="TraesKARUn01G0171210"/>
</dbReference>
<dbReference type="Gramene" id="TraesKARUn01G0171570.1">
    <property type="protein sequence ID" value="cds.TraesKARUn01G0171570.1"/>
    <property type="gene ID" value="TraesKARUn01G0171570"/>
</dbReference>
<dbReference type="Gramene" id="TraesKARUn01G0172010.1">
    <property type="protein sequence ID" value="cds.TraesKARUn01G0172010.1"/>
    <property type="gene ID" value="TraesKARUn01G0172010"/>
</dbReference>
<dbReference type="Gramene" id="TraesKARUn01G0172610.1">
    <property type="protein sequence ID" value="cds.TraesKARUn01G0172610.1"/>
    <property type="gene ID" value="TraesKARUn01G0172610"/>
</dbReference>
<dbReference type="Gramene" id="TraesKARUn01G0173290.1">
    <property type="protein sequence ID" value="cds.TraesKARUn01G0173290.1"/>
    <property type="gene ID" value="TraesKARUn01G0173290"/>
</dbReference>
<dbReference type="Gramene" id="TraesKARUn01G0174040.1">
    <property type="protein sequence ID" value="cds.TraesKARUn01G0174040.1"/>
    <property type="gene ID" value="TraesKARUn01G0174040"/>
</dbReference>
<dbReference type="Gramene" id="TraesKARUn01G0174800.1">
    <property type="protein sequence ID" value="cds.TraesKARUn01G0174800.1"/>
    <property type="gene ID" value="TraesKARUn01G0174800"/>
</dbReference>
<dbReference type="Gramene" id="TraesKARUn01G0174910.1">
    <property type="protein sequence ID" value="cds.TraesKARUn01G0174910.1"/>
    <property type="gene ID" value="TraesKARUn01G0174910"/>
</dbReference>
<dbReference type="Gramene" id="TraesKARUn01G0175300.1">
    <property type="protein sequence ID" value="cds.TraesKARUn01G0175300.1"/>
    <property type="gene ID" value="TraesKARUn01G0175300"/>
</dbReference>
<dbReference type="Gramene" id="TraesKARUn01G0175350.1">
    <property type="protein sequence ID" value="cds.TraesKARUn01G0175350.1"/>
    <property type="gene ID" value="TraesKARUn01G0175350"/>
</dbReference>
<dbReference type="Gramene" id="TraesKARUn01G0176640.1">
    <property type="protein sequence ID" value="cds.TraesKARUn01G0176640.1"/>
    <property type="gene ID" value="TraesKARUn01G0176640"/>
</dbReference>
<dbReference type="Gramene" id="TraesKARUn01G0176830.1">
    <property type="protein sequence ID" value="cds.TraesKARUn01G0176830.1"/>
    <property type="gene ID" value="TraesKARUn01G0176830"/>
</dbReference>
<dbReference type="Gramene" id="TraesKARUn01G0177020.1">
    <property type="protein sequence ID" value="cds.TraesKARUn01G0177020.1"/>
    <property type="gene ID" value="TraesKARUn01G0177020"/>
</dbReference>
<dbReference type="Gramene" id="TraesKARUn01G0177200.1">
    <property type="protein sequence ID" value="cds.TraesKARUn01G0177200.1"/>
    <property type="gene ID" value="TraesKARUn01G0177200"/>
</dbReference>
<dbReference type="Gramene" id="TraesKARUn01G0180960.1">
    <property type="protein sequence ID" value="cds.TraesKARUn01G0180960.1"/>
    <property type="gene ID" value="TraesKARUn01G0180960"/>
</dbReference>
<dbReference type="Gramene" id="TraesKARUn01G0181080.1">
    <property type="protein sequence ID" value="cds.TraesKARUn01G0181080.1"/>
    <property type="gene ID" value="TraesKARUn01G0181080"/>
</dbReference>
<dbReference type="Gramene" id="TraesKARUn01G0181590.1">
    <property type="protein sequence ID" value="cds.TraesKARUn01G0181590.1"/>
    <property type="gene ID" value="TraesKARUn01G0181590"/>
</dbReference>
<dbReference type="Gramene" id="TraesKARUn01G0181830.1">
    <property type="protein sequence ID" value="cds.TraesKARUn01G0181830.1"/>
    <property type="gene ID" value="TraesKARUn01G0181830"/>
</dbReference>
<dbReference type="Gramene" id="TraesKARUn01G0182570.1">
    <property type="protein sequence ID" value="cds.TraesKARUn01G0182570.1"/>
    <property type="gene ID" value="TraesKARUn01G0182570"/>
</dbReference>
<dbReference type="Gramene" id="TraesKARUn01G0183190.1">
    <property type="protein sequence ID" value="cds.TraesKARUn01G0183190.1"/>
    <property type="gene ID" value="TraesKARUn01G0183190"/>
</dbReference>
<dbReference type="Gramene" id="TraesKARUn01G0183240.1">
    <property type="protein sequence ID" value="cds.TraesKARUn01G0183240.1"/>
    <property type="gene ID" value="TraesKARUn01G0183240"/>
</dbReference>
<dbReference type="Gramene" id="TraesKARUn01G0183610.1">
    <property type="protein sequence ID" value="cds.TraesKARUn01G0183610.1"/>
    <property type="gene ID" value="TraesKARUn01G0183610"/>
</dbReference>
<dbReference type="Gramene" id="TraesKARUn01G0183940.1">
    <property type="protein sequence ID" value="cds.TraesKARUn01G0183940.1"/>
    <property type="gene ID" value="TraesKARUn01G0183940"/>
</dbReference>
<dbReference type="Gramene" id="TraesKARUn01G0185180.1">
    <property type="protein sequence ID" value="cds.TraesKARUn01G0185180.1"/>
    <property type="gene ID" value="TraesKARUn01G0185180"/>
</dbReference>
<dbReference type="Gramene" id="TraesKARUn01G0185210.1">
    <property type="protein sequence ID" value="cds.TraesKARUn01G0185210.1"/>
    <property type="gene ID" value="TraesKARUn01G0185210"/>
</dbReference>
<dbReference type="Gramene" id="TraesKARUn01G0185630.1">
    <property type="protein sequence ID" value="cds.TraesKARUn01G0185630.1"/>
    <property type="gene ID" value="TraesKARUn01G0185630"/>
</dbReference>
<dbReference type="Gramene" id="TraesKARUn01G0186070.1">
    <property type="protein sequence ID" value="cds.TraesKARUn01G0186070.1"/>
    <property type="gene ID" value="TraesKARUn01G0186070"/>
</dbReference>
<dbReference type="Gramene" id="TraesKARUn01G0186580.1">
    <property type="protein sequence ID" value="cds.TraesKARUn01G0186580.1"/>
    <property type="gene ID" value="TraesKARUn01G0186580"/>
</dbReference>
<dbReference type="Gramene" id="TraesKARUn01G0186680.1">
    <property type="protein sequence ID" value="cds.TraesKARUn01G0186680.1"/>
    <property type="gene ID" value="TraesKARUn01G0186680"/>
</dbReference>
<dbReference type="Gramene" id="TraesKARUn01G0186750.1">
    <property type="protein sequence ID" value="cds.TraesKARUn01G0186750.1"/>
    <property type="gene ID" value="TraesKARUn01G0186750"/>
</dbReference>
<dbReference type="Gramene" id="TraesKARUn01G0187710.1">
    <property type="protein sequence ID" value="cds.TraesKARUn01G0187710.1"/>
    <property type="gene ID" value="TraesKARUn01G0187710"/>
</dbReference>
<dbReference type="Gramene" id="TraesKARUn01G0188100.1">
    <property type="protein sequence ID" value="cds.TraesKARUn01G0188100.1"/>
    <property type="gene ID" value="TraesKARUn01G0188100"/>
</dbReference>
<dbReference type="Gramene" id="TraesKARUn01G0188400.1">
    <property type="protein sequence ID" value="cds.TraesKARUn01G0188400.1"/>
    <property type="gene ID" value="TraesKARUn01G0188400"/>
</dbReference>
<dbReference type="Gramene" id="TraesKARUn01G0189930.1">
    <property type="protein sequence ID" value="cds.TraesKARUn01G0189930.1"/>
    <property type="gene ID" value="TraesKARUn01G0189930"/>
</dbReference>
<dbReference type="Gramene" id="TraesKARUn01G0190660.1">
    <property type="protein sequence ID" value="cds.TraesKARUn01G0190660.1"/>
    <property type="gene ID" value="TraesKARUn01G0190660"/>
</dbReference>
<dbReference type="Gramene" id="TraesKARUn01G0191900.1">
    <property type="protein sequence ID" value="cds.TraesKARUn01G0191900.1"/>
    <property type="gene ID" value="TraesKARUn01G0191900"/>
</dbReference>
<dbReference type="Gramene" id="TraesKARUn01G0192320.1">
    <property type="protein sequence ID" value="cds.TraesKARUn01G0192320.1"/>
    <property type="gene ID" value="TraesKARUn01G0192320"/>
</dbReference>
<dbReference type="Gramene" id="TraesKARUn01G0194080.1">
    <property type="protein sequence ID" value="cds.TraesKARUn01G0194080.1"/>
    <property type="gene ID" value="TraesKARUn01G0194080"/>
</dbReference>
<dbReference type="Gramene" id="TraesPARA_EIv1.0_2055170.1">
    <property type="protein sequence ID" value="TraesPARA_EIv1.0_2055170.1.CDS1"/>
    <property type="gene ID" value="TraesPARA_EIv1.0_2055170"/>
</dbReference>
<dbReference type="Gramene" id="TraesPARA_EIv1.0_2055740.1">
    <property type="protein sequence ID" value="TraesPARA_EIv1.0_2055740.1.CDS1"/>
    <property type="gene ID" value="TraesPARA_EIv1.0_2055740"/>
</dbReference>
<dbReference type="Gramene" id="TraesPARA_EIv1.0_2643670.1">
    <property type="protein sequence ID" value="TraesPARA_EIv1.0_2643670.1.CDS1"/>
    <property type="gene ID" value="TraesPARA_EIv1.0_2643670"/>
</dbReference>
<dbReference type="Gramene" id="TraesPARA_EIv1.0_2644020.1">
    <property type="protein sequence ID" value="TraesPARA_EIv1.0_2644020.1.CDS1"/>
    <property type="gene ID" value="TraesPARA_EIv1.0_2644020"/>
</dbReference>
<dbReference type="Gramene" id="TraesPARA_EIv1.0_2644250.1">
    <property type="protein sequence ID" value="TraesPARA_EIv1.0_2644250.1.CDS1"/>
    <property type="gene ID" value="TraesPARA_EIv1.0_2644250"/>
</dbReference>
<dbReference type="Gramene" id="TraesPARA_EIv1.0_2644400.1">
    <property type="protein sequence ID" value="TraesPARA_EIv1.0_2644400.1.CDS1"/>
    <property type="gene ID" value="TraesPARA_EIv1.0_2644400"/>
</dbReference>
<dbReference type="Gramene" id="TraesPARA_EIv1.0_2644570.1">
    <property type="protein sequence ID" value="TraesPARA_EIv1.0_2644570.1.CDS1"/>
    <property type="gene ID" value="TraesPARA_EIv1.0_2644570"/>
</dbReference>
<dbReference type="Gramene" id="TraesPARA_EIv1.0_2645640.1">
    <property type="protein sequence ID" value="TraesPARA_EIv1.0_2645640.1.CDS1"/>
    <property type="gene ID" value="TraesPARA_EIv1.0_2645640"/>
</dbReference>
<dbReference type="Gramene" id="TraesPARA_EIv1.0_2645680.1">
    <property type="protein sequence ID" value="TraesPARA_EIv1.0_2645680.1.CDS1"/>
    <property type="gene ID" value="TraesPARA_EIv1.0_2645680"/>
</dbReference>
<dbReference type="Gramene" id="TraesPARA_EIv1.0_2645950.1">
    <property type="protein sequence ID" value="TraesPARA_EIv1.0_2645950.1.CDS1"/>
    <property type="gene ID" value="TraesPARA_EIv1.0_2645950"/>
</dbReference>
<dbReference type="Gramene" id="TraesPARA_EIv1.0_2646290.1">
    <property type="protein sequence ID" value="TraesPARA_EIv1.0_2646290.1.CDS1"/>
    <property type="gene ID" value="TraesPARA_EIv1.0_2646290"/>
</dbReference>
<dbReference type="Gramene" id="TraesPARA_EIv1.0_2646490.1">
    <property type="protein sequence ID" value="TraesPARA_EIv1.0_2646490.1.CDS1"/>
    <property type="gene ID" value="TraesPARA_EIv1.0_2646490"/>
</dbReference>
<dbReference type="Gramene" id="TraesPARA_EIv1.0_2646860.1">
    <property type="protein sequence ID" value="TraesPARA_EIv1.0_2646860.1.CDS1"/>
    <property type="gene ID" value="TraesPARA_EIv1.0_2646860"/>
</dbReference>
<dbReference type="Gramene" id="TraesPARA_EIv1.0_2646990.1">
    <property type="protein sequence ID" value="TraesPARA_EIv1.0_2646990.1.CDS1"/>
    <property type="gene ID" value="TraesPARA_EIv1.0_2646990"/>
</dbReference>
<dbReference type="Gramene" id="TraesPARA_EIv1.0_2647580.1">
    <property type="protein sequence ID" value="TraesPARA_EIv1.0_2647580.1.CDS1"/>
    <property type="gene ID" value="TraesPARA_EIv1.0_2647580"/>
</dbReference>
<dbReference type="Gramene" id="TraesPARA_EIv1.0_2647940.1">
    <property type="protein sequence ID" value="TraesPARA_EIv1.0_2647940.1.CDS1"/>
    <property type="gene ID" value="TraesPARA_EIv1.0_2647940"/>
</dbReference>
<dbReference type="Gramene" id="TraesPARA_EIv1.0_2648610.1">
    <property type="protein sequence ID" value="TraesPARA_EIv1.0_2648610.1.CDS1"/>
    <property type="gene ID" value="TraesPARA_EIv1.0_2648610"/>
</dbReference>
<dbReference type="Gramene" id="TraesPARA_EIv1.0_2648890.1">
    <property type="protein sequence ID" value="TraesPARA_EIv1.0_2648890.1.CDS1"/>
    <property type="gene ID" value="TraesPARA_EIv1.0_2648890"/>
</dbReference>
<dbReference type="Gramene" id="TraesPARA_EIv1.0_2648920.1">
    <property type="protein sequence ID" value="TraesPARA_EIv1.0_2648920.1.CDS1"/>
    <property type="gene ID" value="TraesPARA_EIv1.0_2648920"/>
</dbReference>
<dbReference type="Gramene" id="TraesPARA_EIv1.0_2649040.1">
    <property type="protein sequence ID" value="TraesPARA_EIv1.0_2649040.1.CDS1"/>
    <property type="gene ID" value="TraesPARA_EIv1.0_2649040"/>
</dbReference>
<dbReference type="Gramene" id="TraesPARA_EIv1.0_2649450.1">
    <property type="protein sequence ID" value="TraesPARA_EIv1.0_2649450.1.CDS1"/>
    <property type="gene ID" value="TraesPARA_EIv1.0_2649450"/>
</dbReference>
<dbReference type="Gramene" id="TraesPARA_EIv1.0_2649560.1">
    <property type="protein sequence ID" value="TraesPARA_EIv1.0_2649560.1.CDS1"/>
    <property type="gene ID" value="TraesPARA_EIv1.0_2649560"/>
</dbReference>
<dbReference type="Gramene" id="TraesPARA_EIv1.0_2649680.1">
    <property type="protein sequence ID" value="TraesPARA_EIv1.0_2649680.1.CDS1"/>
    <property type="gene ID" value="TraesPARA_EIv1.0_2649680"/>
</dbReference>
<dbReference type="Gramene" id="TraesPARA_EIv1.0_2649950.1">
    <property type="protein sequence ID" value="TraesPARA_EIv1.0_2649950.1.CDS1"/>
    <property type="gene ID" value="TraesPARA_EIv1.0_2649950"/>
</dbReference>
<dbReference type="Gramene" id="TraesPARA_EIv1.0_2650110.1">
    <property type="protein sequence ID" value="TraesPARA_EIv1.0_2650110.1.CDS1"/>
    <property type="gene ID" value="TraesPARA_EIv1.0_2650110"/>
</dbReference>
<dbReference type="Gramene" id="TraesPARA_EIv1.0_2650180.1">
    <property type="protein sequence ID" value="TraesPARA_EIv1.0_2650180.1.CDS1"/>
    <property type="gene ID" value="TraesPARA_EIv1.0_2650180"/>
</dbReference>
<dbReference type="Gramene" id="TraesPARA_EIv1.0_2650650.1">
    <property type="protein sequence ID" value="TraesPARA_EIv1.0_2650650.1.CDS1"/>
    <property type="gene ID" value="TraesPARA_EIv1.0_2650650"/>
</dbReference>
<dbReference type="Gramene" id="TraesPARA_EIv1.0_2651250.1">
    <property type="protein sequence ID" value="TraesPARA_EIv1.0_2651250.1.CDS1"/>
    <property type="gene ID" value="TraesPARA_EIv1.0_2651250"/>
</dbReference>
<dbReference type="Gramene" id="TraesPARA_EIv1.0_2651410.1">
    <property type="protein sequence ID" value="TraesPARA_EIv1.0_2651410.1.CDS1"/>
    <property type="gene ID" value="TraesPARA_EIv1.0_2651410"/>
</dbReference>
<dbReference type="Gramene" id="TraesPARA_EIv1.0_2652100.1">
    <property type="protein sequence ID" value="TraesPARA_EIv1.0_2652100.1.CDS1"/>
    <property type="gene ID" value="TraesPARA_EIv1.0_2652100"/>
</dbReference>
<dbReference type="Gramene" id="TraesPARA_EIv1.0_2652550.1">
    <property type="protein sequence ID" value="TraesPARA_EIv1.0_2652550.1.CDS1"/>
    <property type="gene ID" value="TraesPARA_EIv1.0_2652550"/>
</dbReference>
<dbReference type="Gramene" id="TraesPARA_EIv1.0_2652910.1">
    <property type="protein sequence ID" value="TraesPARA_EIv1.0_2652910.1.CDS1"/>
    <property type="gene ID" value="TraesPARA_EIv1.0_2652910"/>
</dbReference>
<dbReference type="Gramene" id="TraesPARA_EIv1.0_2653060.1">
    <property type="protein sequence ID" value="TraesPARA_EIv1.0_2653060.1.CDS1"/>
    <property type="gene ID" value="TraesPARA_EIv1.0_2653060"/>
</dbReference>
<dbReference type="Gramene" id="TraesPARA_EIv1.0_2653420.1">
    <property type="protein sequence ID" value="TraesPARA_EIv1.0_2653420.1.CDS1"/>
    <property type="gene ID" value="TraesPARA_EIv1.0_2653420"/>
</dbReference>
<dbReference type="Gramene" id="TraesPARA_EIv1.0_2653850.1">
    <property type="protein sequence ID" value="TraesPARA_EIv1.0_2653850.1.CDS1"/>
    <property type="gene ID" value="TraesPARA_EIv1.0_2653850"/>
</dbReference>
<dbReference type="Gramene" id="TraesPARA_EIv1.0_2654270.1">
    <property type="protein sequence ID" value="TraesPARA_EIv1.0_2654270.1.CDS1"/>
    <property type="gene ID" value="TraesPARA_EIv1.0_2654270"/>
</dbReference>
<dbReference type="Gramene" id="TraesPARA_EIv1.0_2654450.1">
    <property type="protein sequence ID" value="TraesPARA_EIv1.0_2654450.1.CDS1"/>
    <property type="gene ID" value="TraesPARA_EIv1.0_2654450"/>
</dbReference>
<dbReference type="Gramene" id="TraesPARA_EIv1.0_2654520.1">
    <property type="protein sequence ID" value="TraesPARA_EIv1.0_2654520.1.CDS1"/>
    <property type="gene ID" value="TraesPARA_EIv1.0_2654520"/>
</dbReference>
<dbReference type="Gramene" id="TraesPARA_EIv1.0_2654820.1">
    <property type="protein sequence ID" value="TraesPARA_EIv1.0_2654820.1.CDS1"/>
    <property type="gene ID" value="TraesPARA_EIv1.0_2654820"/>
</dbReference>
<dbReference type="Gramene" id="TraesPARA_EIv1.0_2654830.1">
    <property type="protein sequence ID" value="TraesPARA_EIv1.0_2654830.1.CDS1"/>
    <property type="gene ID" value="TraesPARA_EIv1.0_2654830"/>
</dbReference>
<dbReference type="Gramene" id="TraesPARA_EIv1.0_2655150.1">
    <property type="protein sequence ID" value="TraesPARA_EIv1.0_2655150.1.CDS1"/>
    <property type="gene ID" value="TraesPARA_EIv1.0_2655150"/>
</dbReference>
<dbReference type="Gramene" id="TraesPARA_EIv1.0_2655270.1">
    <property type="protein sequence ID" value="TraesPARA_EIv1.0_2655270.1.CDS1"/>
    <property type="gene ID" value="TraesPARA_EIv1.0_2655270"/>
</dbReference>
<dbReference type="Gramene" id="TraesPARA_EIv1.0_2655330.1">
    <property type="protein sequence ID" value="TraesPARA_EIv1.0_2655330.1.CDS1"/>
    <property type="gene ID" value="TraesPARA_EIv1.0_2655330"/>
</dbReference>
<dbReference type="Gramene" id="TraesPARA_EIv1.0_2655560.1">
    <property type="protein sequence ID" value="TraesPARA_EIv1.0_2655560.1.CDS1"/>
    <property type="gene ID" value="TraesPARA_EIv1.0_2655560"/>
</dbReference>
<dbReference type="Gramene" id="TraesPARA_EIv1.0_2655760.1">
    <property type="protein sequence ID" value="TraesPARA_EIv1.0_2655760.1.CDS1"/>
    <property type="gene ID" value="TraesPARA_EIv1.0_2655760"/>
</dbReference>
<dbReference type="Gramene" id="TraesPARA_EIv1.0_2656050.1">
    <property type="protein sequence ID" value="TraesPARA_EIv1.0_2656050.1.CDS1"/>
    <property type="gene ID" value="TraesPARA_EIv1.0_2656050"/>
</dbReference>
<dbReference type="Gramene" id="TraesPARA_EIv1.0_2656460.1">
    <property type="protein sequence ID" value="TraesPARA_EIv1.0_2656460.1.CDS1"/>
    <property type="gene ID" value="TraesPARA_EIv1.0_2656460"/>
</dbReference>
<dbReference type="Gramene" id="TraesPARA_EIv1.0_2656480.1">
    <property type="protein sequence ID" value="TraesPARA_EIv1.0_2656480.1.CDS1"/>
    <property type="gene ID" value="TraesPARA_EIv1.0_2656480"/>
</dbReference>
<dbReference type="Gramene" id="TraesPARA_EIv1.0_2656750.1">
    <property type="protein sequence ID" value="TraesPARA_EIv1.0_2656750.1.CDS1"/>
    <property type="gene ID" value="TraesPARA_EIv1.0_2656750"/>
</dbReference>
<dbReference type="Gramene" id="TraesPARA_EIv1.0_2656790.1">
    <property type="protein sequence ID" value="TraesPARA_EIv1.0_2656790.1.CDS1"/>
    <property type="gene ID" value="TraesPARA_EIv1.0_2656790"/>
</dbReference>
<dbReference type="Gramene" id="TraesPARA_EIv1.0_2657180.1">
    <property type="protein sequence ID" value="TraesPARA_EIv1.0_2657180.1.CDS1"/>
    <property type="gene ID" value="TraesPARA_EIv1.0_2657180"/>
</dbReference>
<dbReference type="Gramene" id="TraesPARA_EIv1.0_2658080.1">
    <property type="protein sequence ID" value="TraesPARA_EIv1.0_2658080.1.CDS1"/>
    <property type="gene ID" value="TraesPARA_EIv1.0_2658080"/>
</dbReference>
<dbReference type="Gramene" id="TraesPARA_EIv1.0_2658400.1">
    <property type="protein sequence ID" value="TraesPARA_EIv1.0_2658400.1.CDS1"/>
    <property type="gene ID" value="TraesPARA_EIv1.0_2658400"/>
</dbReference>
<dbReference type="Gramene" id="TraesPARA_EIv1.0_2660100.1">
    <property type="protein sequence ID" value="TraesPARA_EIv1.0_2660100.1.CDS1"/>
    <property type="gene ID" value="TraesPARA_EIv1.0_2660100"/>
</dbReference>
<dbReference type="Gramene" id="TraesPARA_EIv1.0_2660260.1">
    <property type="protein sequence ID" value="TraesPARA_EIv1.0_2660260.1.CDS1"/>
    <property type="gene ID" value="TraesPARA_EIv1.0_2660260"/>
</dbReference>
<dbReference type="Gramene" id="TraesPARA_EIv1.0_2662830.1">
    <property type="protein sequence ID" value="TraesPARA_EIv1.0_2662830.1.CDS1"/>
    <property type="gene ID" value="TraesPARA_EIv1.0_2662830"/>
</dbReference>
<dbReference type="Gramene" id="TraesPARA_EIv1.0_2663010.1">
    <property type="protein sequence ID" value="TraesPARA_EIv1.0_2663010.1.CDS1"/>
    <property type="gene ID" value="TraesPARA_EIv1.0_2663010"/>
</dbReference>
<dbReference type="Gramene" id="TraesPARA_EIv1.0_2663290.1">
    <property type="protein sequence ID" value="TraesPARA_EIv1.0_2663290.1.CDS1"/>
    <property type="gene ID" value="TraesPARA_EIv1.0_2663290"/>
</dbReference>
<dbReference type="Gramene" id="TraesPARA_EIv1.0_2663580.1">
    <property type="protein sequence ID" value="TraesPARA_EIv1.0_2663580.1.CDS1"/>
    <property type="gene ID" value="TraesPARA_EIv1.0_2663580"/>
</dbReference>
<dbReference type="Gramene" id="TraesPARA_EIv1.0_2663750.1">
    <property type="protein sequence ID" value="TraesPARA_EIv1.0_2663750.1.CDS1"/>
    <property type="gene ID" value="TraesPARA_EIv1.0_2663750"/>
</dbReference>
<dbReference type="Gramene" id="TraesPARA_EIv1.0_2665600.1">
    <property type="protein sequence ID" value="TraesPARA_EIv1.0_2665600.1.CDS1"/>
    <property type="gene ID" value="TraesPARA_EIv1.0_2665600"/>
</dbReference>
<dbReference type="Gramene" id="TraesPARA_EIv1.0_2665710.1">
    <property type="protein sequence ID" value="TraesPARA_EIv1.0_2665710.1.CDS1"/>
    <property type="gene ID" value="TraesPARA_EIv1.0_2665710"/>
</dbReference>
<dbReference type="Gramene" id="TraesPARA_EIv1.0_2666260.1">
    <property type="protein sequence ID" value="TraesPARA_EIv1.0_2666260.1.CDS1"/>
    <property type="gene ID" value="TraesPARA_EIv1.0_2666260"/>
</dbReference>
<dbReference type="Gramene" id="TraesPARA_EIv1.0_2666890.1">
    <property type="protein sequence ID" value="TraesPARA_EIv1.0_2666890.1.CDS1"/>
    <property type="gene ID" value="TraesPARA_EIv1.0_2666890"/>
</dbReference>
<dbReference type="Gramene" id="TraesPARA_EIv1.0_2667160.1">
    <property type="protein sequence ID" value="TraesPARA_EIv1.0_2667160.1.CDS1"/>
    <property type="gene ID" value="TraesPARA_EIv1.0_2667160"/>
</dbReference>
<dbReference type="Gramene" id="TraesPARA_EIv1.0_2667220.1">
    <property type="protein sequence ID" value="TraesPARA_EIv1.0_2667220.1.CDS1"/>
    <property type="gene ID" value="TraesPARA_EIv1.0_2667220"/>
</dbReference>
<dbReference type="Gramene" id="TraesPARA_EIv1.0_2667260.1">
    <property type="protein sequence ID" value="TraesPARA_EIv1.0_2667260.1.CDS1"/>
    <property type="gene ID" value="TraesPARA_EIv1.0_2667260"/>
</dbReference>
<dbReference type="Gramene" id="TraesPARA_EIv1.0_2667970.1">
    <property type="protein sequence ID" value="TraesPARA_EIv1.0_2667970.1.CDS1"/>
    <property type="gene ID" value="TraesPARA_EIv1.0_2667970"/>
</dbReference>
<dbReference type="Gramene" id="TraesPARA_EIv1.0_2668000.1">
    <property type="protein sequence ID" value="TraesPARA_EIv1.0_2668000.1.CDS1"/>
    <property type="gene ID" value="TraesPARA_EIv1.0_2668000"/>
</dbReference>
<dbReference type="Gramene" id="TraesPARA_EIv1.0_2668230.1">
    <property type="protein sequence ID" value="TraesPARA_EIv1.0_2668230.1.CDS1"/>
    <property type="gene ID" value="TraesPARA_EIv1.0_2668230"/>
</dbReference>
<dbReference type="Gramene" id="TraesPARA_EIv1.0_2668560.1">
    <property type="protein sequence ID" value="TraesPARA_EIv1.0_2668560.1.CDS1"/>
    <property type="gene ID" value="TraesPARA_EIv1.0_2668560"/>
</dbReference>
<dbReference type="Gramene" id="TraesPARA_EIv1.0_2668770.1">
    <property type="protein sequence ID" value="TraesPARA_EIv1.0_2668770.1.CDS1"/>
    <property type="gene ID" value="TraesPARA_EIv1.0_2668770"/>
</dbReference>
<dbReference type="Gramene" id="TraesPARA_EIv1.0_2669600.1">
    <property type="protein sequence ID" value="TraesPARA_EIv1.0_2669600.1.CDS1"/>
    <property type="gene ID" value="TraesPARA_EIv1.0_2669600"/>
</dbReference>
<dbReference type="Gramene" id="TraesPARA_EIv1.0_2670050.1">
    <property type="protein sequence ID" value="TraesPARA_EIv1.0_2670050.1.CDS1"/>
    <property type="gene ID" value="TraesPARA_EIv1.0_2670050"/>
</dbReference>
<dbReference type="Gramene" id="TraesPARA_EIv1.0_2670120.1">
    <property type="protein sequence ID" value="TraesPARA_EIv1.0_2670120.1.CDS1"/>
    <property type="gene ID" value="TraesPARA_EIv1.0_2670120"/>
</dbReference>
<dbReference type="Gramene" id="TraesPARA_EIv1.0_2670220.1">
    <property type="protein sequence ID" value="TraesPARA_EIv1.0_2670220.1.CDS1"/>
    <property type="gene ID" value="TraesPARA_EIv1.0_2670220"/>
</dbReference>
<dbReference type="Gramene" id="TraesPARA_EIv1.0_2670370.1">
    <property type="protein sequence ID" value="TraesPARA_EIv1.0_2670370.1.CDS1"/>
    <property type="gene ID" value="TraesPARA_EIv1.0_2670370"/>
</dbReference>
<dbReference type="Gramene" id="TraesPARA_EIv1.0_2671030.1">
    <property type="protein sequence ID" value="TraesPARA_EIv1.0_2671030.1.CDS1"/>
    <property type="gene ID" value="TraesPARA_EIv1.0_2671030"/>
</dbReference>
<dbReference type="Gramene" id="TraesPARA_EIv1.0_2671040.1">
    <property type="protein sequence ID" value="TraesPARA_EIv1.0_2671040.1.CDS1"/>
    <property type="gene ID" value="TraesPARA_EIv1.0_2671040"/>
</dbReference>
<dbReference type="Gramene" id="TraesPARA_EIv1.0_2671560.1">
    <property type="protein sequence ID" value="TraesPARA_EIv1.0_2671560.1.CDS1"/>
    <property type="gene ID" value="TraesPARA_EIv1.0_2671560"/>
</dbReference>
<dbReference type="Gramene" id="TraesPARA_EIv1.0_2671920.1">
    <property type="protein sequence ID" value="TraesPARA_EIv1.0_2671920.1.CDS1"/>
    <property type="gene ID" value="TraesPARA_EIv1.0_2671920"/>
</dbReference>
<dbReference type="Gramene" id="TraesPARA_EIv1.0_2672770.1">
    <property type="protein sequence ID" value="TraesPARA_EIv1.0_2672770.1.CDS1"/>
    <property type="gene ID" value="TraesPARA_EIv1.0_2672770"/>
</dbReference>
<dbReference type="Gramene" id="TraesPARA_EIv1.0_2673540.1">
    <property type="protein sequence ID" value="TraesPARA_EIv1.0_2673540.1.CDS1"/>
    <property type="gene ID" value="TraesPARA_EIv1.0_2673540"/>
</dbReference>
<dbReference type="Gramene" id="TraesPARA_EIv1.0_2673780.1">
    <property type="protein sequence ID" value="TraesPARA_EIv1.0_2673780.1.CDS1"/>
    <property type="gene ID" value="TraesPARA_EIv1.0_2673780"/>
</dbReference>
<dbReference type="Gramene" id="TraesPARA_EIv1.0_2673820.1">
    <property type="protein sequence ID" value="TraesPARA_EIv1.0_2673820.1.CDS1"/>
    <property type="gene ID" value="TraesPARA_EIv1.0_2673820"/>
</dbReference>
<dbReference type="Gramene" id="TraesPARA_EIv1.0_2674050.1">
    <property type="protein sequence ID" value="TraesPARA_EIv1.0_2674050.1.CDS1"/>
    <property type="gene ID" value="TraesPARA_EIv1.0_2674050"/>
</dbReference>
<dbReference type="Gramene" id="TraesPARA_EIv1.0_2674190.1">
    <property type="protein sequence ID" value="TraesPARA_EIv1.0_2674190.1.CDS1"/>
    <property type="gene ID" value="TraesPARA_EIv1.0_2674190"/>
</dbReference>
<dbReference type="Gramene" id="TraesPARA_EIv1.0_2674410.1">
    <property type="protein sequence ID" value="TraesPARA_EIv1.0_2674410.1.CDS1"/>
    <property type="gene ID" value="TraesPARA_EIv1.0_2674410"/>
</dbReference>
<dbReference type="Gramene" id="TraesPARA_EIv1.0_2674470.1">
    <property type="protein sequence ID" value="TraesPARA_EIv1.0_2674470.1.CDS1"/>
    <property type="gene ID" value="TraesPARA_EIv1.0_2674470"/>
</dbReference>
<dbReference type="Gramene" id="TraesPARA_EIv1.0_2674560.1">
    <property type="protein sequence ID" value="TraesPARA_EIv1.0_2674560.1.CDS1"/>
    <property type="gene ID" value="TraesPARA_EIv1.0_2674560"/>
</dbReference>
<dbReference type="Gramene" id="TraesPARA_EIv1.0_2675290.1">
    <property type="protein sequence ID" value="TraesPARA_EIv1.0_2675290.1.CDS1"/>
    <property type="gene ID" value="TraesPARA_EIv1.0_2675290"/>
</dbReference>
<dbReference type="Gramene" id="TraesPARA_EIv1.0_2676000.1">
    <property type="protein sequence ID" value="TraesPARA_EIv1.0_2676000.1.CDS1"/>
    <property type="gene ID" value="TraesPARA_EIv1.0_2676000"/>
</dbReference>
<dbReference type="Gramene" id="TraesPARA_EIv1.0_2676430.1">
    <property type="protein sequence ID" value="TraesPARA_EIv1.0_2676430.1.CDS1"/>
    <property type="gene ID" value="TraesPARA_EIv1.0_2676430"/>
</dbReference>
<dbReference type="Gramene" id="TraesPARA_EIv1.0_2676650.1">
    <property type="protein sequence ID" value="TraesPARA_EIv1.0_2676650.1.CDS1"/>
    <property type="gene ID" value="TraesPARA_EIv1.0_2676650"/>
</dbReference>
<dbReference type="Gramene" id="TraesPARA_EIv1.0_2677040.1">
    <property type="protein sequence ID" value="TraesPARA_EIv1.0_2677040.1.CDS1"/>
    <property type="gene ID" value="TraesPARA_EIv1.0_2677040"/>
</dbReference>
<dbReference type="Gramene" id="TraesPARA_EIv1.0_2677070.1">
    <property type="protein sequence ID" value="TraesPARA_EIv1.0_2677070.1.CDS1"/>
    <property type="gene ID" value="TraesPARA_EIv1.0_2677070"/>
</dbReference>
<dbReference type="Gramene" id="TraesPARA_EIv1.0_2677140.1">
    <property type="protein sequence ID" value="TraesPARA_EIv1.0_2677140.1.CDS1"/>
    <property type="gene ID" value="TraesPARA_EIv1.0_2677140"/>
</dbReference>
<dbReference type="Gramene" id="TraesPARA_EIv1.0_2678330.1">
    <property type="protein sequence ID" value="TraesPARA_EIv1.0_2678330.1.CDS1"/>
    <property type="gene ID" value="TraesPARA_EIv1.0_2678330"/>
</dbReference>
<dbReference type="Gramene" id="TraesPARA_EIv1.0_2679670.1">
    <property type="protein sequence ID" value="TraesPARA_EIv1.0_2679670.1.CDS1"/>
    <property type="gene ID" value="TraesPARA_EIv1.0_2679670"/>
</dbReference>
<dbReference type="Gramene" id="TraesPARA_EIv1.0_2680000.1">
    <property type="protein sequence ID" value="TraesPARA_EIv1.0_2680000.1.CDS1"/>
    <property type="gene ID" value="TraesPARA_EIv1.0_2680000"/>
</dbReference>
<dbReference type="Gramene" id="TraesPARA_EIv1.0_2681010.1">
    <property type="protein sequence ID" value="TraesPARA_EIv1.0_2681010.1.CDS1"/>
    <property type="gene ID" value="TraesPARA_EIv1.0_2681010"/>
</dbReference>
<dbReference type="Gramene" id="TraesPARA_EIv1.0_2681230.1">
    <property type="protein sequence ID" value="TraesPARA_EIv1.0_2681230.1.CDS1"/>
    <property type="gene ID" value="TraesPARA_EIv1.0_2681230"/>
</dbReference>
<dbReference type="Gramene" id="TraesPARA_EIv1.0_2681320.1">
    <property type="protein sequence ID" value="TraesPARA_EIv1.0_2681320.1.CDS1"/>
    <property type="gene ID" value="TraesPARA_EIv1.0_2681320"/>
</dbReference>
<dbReference type="Gramene" id="TraesPARA_EIv1.0_2681540.1">
    <property type="protein sequence ID" value="TraesPARA_EIv1.0_2681540.1.CDS1"/>
    <property type="gene ID" value="TraesPARA_EIv1.0_2681540"/>
</dbReference>
<dbReference type="Gramene" id="TraesPARA_EIv1.0_2681670.1">
    <property type="protein sequence ID" value="TraesPARA_EIv1.0_2681670.1.CDS1"/>
    <property type="gene ID" value="TraesPARA_EIv1.0_2681670"/>
</dbReference>
<dbReference type="KEGG" id="taes:803183"/>
<dbReference type="eggNOG" id="ENOG502QR09">
    <property type="taxonomic scope" value="Eukaryota"/>
</dbReference>
<dbReference type="HOGENOM" id="CLU_054206_1_0_1"/>
<dbReference type="OrthoDB" id="1911105at2759"/>
<dbReference type="Proteomes" id="UP000019116">
    <property type="component" value="Chloroplast"/>
</dbReference>
<dbReference type="ExpressionAtlas" id="P12463">
    <property type="expression patterns" value="baseline and differential"/>
</dbReference>
<dbReference type="GO" id="GO:0009535">
    <property type="term" value="C:chloroplast thylakoid membrane"/>
    <property type="evidence" value="ECO:0007669"/>
    <property type="project" value="UniProtKB-SubCell"/>
</dbReference>
<dbReference type="GO" id="GO:0009523">
    <property type="term" value="C:photosystem II"/>
    <property type="evidence" value="ECO:0000318"/>
    <property type="project" value="GO_Central"/>
</dbReference>
<dbReference type="GO" id="GO:0016168">
    <property type="term" value="F:chlorophyll binding"/>
    <property type="evidence" value="ECO:0007669"/>
    <property type="project" value="UniProtKB-UniRule"/>
</dbReference>
<dbReference type="GO" id="GO:0045156">
    <property type="term" value="F:electron transporter, transferring electrons within the cyclic electron transport pathway of photosynthesis activity"/>
    <property type="evidence" value="ECO:0007669"/>
    <property type="project" value="InterPro"/>
</dbReference>
<dbReference type="GO" id="GO:0005506">
    <property type="term" value="F:iron ion binding"/>
    <property type="evidence" value="ECO:0007669"/>
    <property type="project" value="UniProtKB-UniRule"/>
</dbReference>
<dbReference type="GO" id="GO:0016682">
    <property type="term" value="F:oxidoreductase activity, acting on diphenols and related substances as donors, oxygen as acceptor"/>
    <property type="evidence" value="ECO:0007669"/>
    <property type="project" value="UniProtKB-UniRule"/>
</dbReference>
<dbReference type="GO" id="GO:0010242">
    <property type="term" value="F:oxygen evolving activity"/>
    <property type="evidence" value="ECO:0007669"/>
    <property type="project" value="UniProtKB-EC"/>
</dbReference>
<dbReference type="GO" id="GO:0009772">
    <property type="term" value="P:photosynthetic electron transport in photosystem II"/>
    <property type="evidence" value="ECO:0007669"/>
    <property type="project" value="InterPro"/>
</dbReference>
<dbReference type="GO" id="GO:0009635">
    <property type="term" value="P:response to herbicide"/>
    <property type="evidence" value="ECO:0007669"/>
    <property type="project" value="UniProtKB-KW"/>
</dbReference>
<dbReference type="CDD" id="cd09289">
    <property type="entry name" value="Photosystem-II_D1"/>
    <property type="match status" value="1"/>
</dbReference>
<dbReference type="FunFam" id="1.20.85.10:FF:000002">
    <property type="entry name" value="Photosystem II protein D1"/>
    <property type="match status" value="1"/>
</dbReference>
<dbReference type="Gene3D" id="1.20.85.10">
    <property type="entry name" value="Photosystem II protein D1-like"/>
    <property type="match status" value="1"/>
</dbReference>
<dbReference type="HAMAP" id="MF_01379">
    <property type="entry name" value="PSII_PsbA_D1"/>
    <property type="match status" value="1"/>
</dbReference>
<dbReference type="InterPro" id="IPR055266">
    <property type="entry name" value="D1/D2"/>
</dbReference>
<dbReference type="InterPro" id="IPR036854">
    <property type="entry name" value="Photo_II_D1/D2_sf"/>
</dbReference>
<dbReference type="InterPro" id="IPR000484">
    <property type="entry name" value="Photo_RC_L/M"/>
</dbReference>
<dbReference type="InterPro" id="IPR055265">
    <property type="entry name" value="Photo_RC_L/M_CS"/>
</dbReference>
<dbReference type="InterPro" id="IPR005867">
    <property type="entry name" value="PSII_D1"/>
</dbReference>
<dbReference type="NCBIfam" id="TIGR01151">
    <property type="entry name" value="psbA"/>
    <property type="match status" value="1"/>
</dbReference>
<dbReference type="PANTHER" id="PTHR33149">
    <property type="entry name" value="PHOTOSYSTEM II PROTEIN D1"/>
    <property type="match status" value="1"/>
</dbReference>
<dbReference type="PANTHER" id="PTHR33149:SF58">
    <property type="entry name" value="PHOTOSYSTEM II PROTEIN D1"/>
    <property type="match status" value="1"/>
</dbReference>
<dbReference type="Pfam" id="PF00124">
    <property type="entry name" value="Photo_RC"/>
    <property type="match status" value="1"/>
</dbReference>
<dbReference type="PRINTS" id="PR00256">
    <property type="entry name" value="REACTNCENTRE"/>
</dbReference>
<dbReference type="SUPFAM" id="SSF81483">
    <property type="entry name" value="Bacterial photosystem II reaction centre, L and M subunits"/>
    <property type="match status" value="1"/>
</dbReference>
<dbReference type="PROSITE" id="PS00244">
    <property type="entry name" value="REACTION_CENTER"/>
    <property type="match status" value="1"/>
</dbReference>
<accession>P12463</accession>
<feature type="initiator methionine" description="Removed" evidence="1">
    <location>
        <position position="1"/>
    </location>
</feature>
<feature type="chain" id="PRO_0000090476" description="Photosystem II protein D1" evidence="1">
    <location>
        <begin position="2"/>
        <end position="344"/>
    </location>
</feature>
<feature type="propeptide" id="PRO_0000316487" evidence="1">
    <location>
        <begin position="345"/>
        <end position="353"/>
    </location>
</feature>
<feature type="transmembrane region" description="Helical" evidence="1">
    <location>
        <begin position="29"/>
        <end position="46"/>
    </location>
</feature>
<feature type="transmembrane region" description="Helical" evidence="1">
    <location>
        <begin position="118"/>
        <end position="133"/>
    </location>
</feature>
<feature type="transmembrane region" description="Helical" evidence="1">
    <location>
        <begin position="142"/>
        <end position="156"/>
    </location>
</feature>
<feature type="transmembrane region" description="Helical" evidence="1">
    <location>
        <begin position="197"/>
        <end position="218"/>
    </location>
</feature>
<feature type="transmembrane region" description="Helical" evidence="1">
    <location>
        <begin position="274"/>
        <end position="288"/>
    </location>
</feature>
<feature type="binding site" description="axial binding residue" evidence="1">
    <location>
        <position position="118"/>
    </location>
    <ligand>
        <name>chlorophyll a</name>
        <dbReference type="ChEBI" id="CHEBI:58416"/>
        <label>ChlzD1</label>
    </ligand>
    <ligandPart>
        <name>Mg</name>
        <dbReference type="ChEBI" id="CHEBI:25107"/>
    </ligandPart>
</feature>
<feature type="binding site" evidence="1">
    <location>
        <position position="126"/>
    </location>
    <ligand>
        <name>pheophytin a</name>
        <dbReference type="ChEBI" id="CHEBI:136840"/>
        <label>D1</label>
    </ligand>
</feature>
<feature type="binding site" evidence="1">
    <location>
        <position position="170"/>
    </location>
    <ligand>
        <name>[CaMn4O5] cluster</name>
        <dbReference type="ChEBI" id="CHEBI:189552"/>
    </ligand>
</feature>
<feature type="binding site" evidence="1">
    <location>
        <position position="189"/>
    </location>
    <ligand>
        <name>[CaMn4O5] cluster</name>
        <dbReference type="ChEBI" id="CHEBI:189552"/>
    </ligand>
</feature>
<feature type="binding site" description="axial binding residue" evidence="1">
    <location>
        <position position="198"/>
    </location>
    <ligand>
        <name>chlorophyll a</name>
        <dbReference type="ChEBI" id="CHEBI:58416"/>
        <label>PD1</label>
    </ligand>
    <ligandPart>
        <name>Mg</name>
        <dbReference type="ChEBI" id="CHEBI:25107"/>
    </ligandPart>
</feature>
<feature type="binding site" evidence="1">
    <location>
        <position position="215"/>
    </location>
    <ligand>
        <name>a quinone</name>
        <dbReference type="ChEBI" id="CHEBI:132124"/>
        <label>B</label>
    </ligand>
</feature>
<feature type="binding site" evidence="1">
    <location>
        <position position="215"/>
    </location>
    <ligand>
        <name>Fe cation</name>
        <dbReference type="ChEBI" id="CHEBI:24875"/>
        <note>ligand shared with heterodimeric partner</note>
    </ligand>
</feature>
<feature type="binding site" evidence="1">
    <location>
        <begin position="264"/>
        <end position="265"/>
    </location>
    <ligand>
        <name>a quinone</name>
        <dbReference type="ChEBI" id="CHEBI:132124"/>
        <label>B</label>
    </ligand>
</feature>
<feature type="binding site" evidence="1">
    <location>
        <position position="272"/>
    </location>
    <ligand>
        <name>Fe cation</name>
        <dbReference type="ChEBI" id="CHEBI:24875"/>
        <note>ligand shared with heterodimeric partner</note>
    </ligand>
</feature>
<feature type="binding site" evidence="1">
    <location>
        <position position="332"/>
    </location>
    <ligand>
        <name>[CaMn4O5] cluster</name>
        <dbReference type="ChEBI" id="CHEBI:189552"/>
    </ligand>
</feature>
<feature type="binding site" evidence="1">
    <location>
        <position position="333"/>
    </location>
    <ligand>
        <name>[CaMn4O5] cluster</name>
        <dbReference type="ChEBI" id="CHEBI:189552"/>
    </ligand>
</feature>
<feature type="binding site" evidence="1">
    <location>
        <position position="342"/>
    </location>
    <ligand>
        <name>[CaMn4O5] cluster</name>
        <dbReference type="ChEBI" id="CHEBI:189552"/>
    </ligand>
</feature>
<feature type="binding site" evidence="1">
    <location>
        <position position="344"/>
    </location>
    <ligand>
        <name>[CaMn4O5] cluster</name>
        <dbReference type="ChEBI" id="CHEBI:189552"/>
    </ligand>
</feature>
<feature type="site" description="Tyrosine radical intermediate" evidence="1">
    <location>
        <position position="161"/>
    </location>
</feature>
<feature type="site" description="Stabilizes free radical intermediate" evidence="1">
    <location>
        <position position="190"/>
    </location>
</feature>
<feature type="site" description="Cleavage; by CTPA" evidence="1">
    <location>
        <begin position="344"/>
        <end position="345"/>
    </location>
</feature>
<feature type="modified residue" description="N-acetylthreonine" evidence="1">
    <location>
        <position position="2"/>
    </location>
</feature>
<feature type="modified residue" description="Phosphothreonine" evidence="1">
    <location>
        <position position="2"/>
    </location>
</feature>
<sequence>MTAILERRESTSLWGRFCNWITSTENRLYIGWFGVLMIPTLLTATSVFIIAFIAAPPVDIDGIREPVSGSLLYGNNIISGAIIPTSAAIGLHFYPIWEAASVDEWLYNGGPYELIVLHFLLGVACYMGREWELSFRLGMRPWIAVAYSAPVAAATAVFLIYPIGQGSFSDGMPLGISGTFNFMIVFQAEHNILMHPFHMLGVAGVFGGSLFSAMHGSLVTSSLIRETTENESANEGYKFGQEEETYNIVAAHGYFGRLIFQYASFNNSRSLHFFLAAWPVVGIWFTALGISTMAFNLNGFNFNQSVVDSQGRVINTWADIINRANLGMEVMHERNAHNFPLDLAAVEVPSING</sequence>
<geneLocation type="chloroplast"/>
<reference key="1">
    <citation type="journal article" date="2000" name="Plant Mol. Biol. Rep.">
        <title>Chinese spring wheat (Triticum aestivum L.) chloroplast genome: complete sequence and contig clones.</title>
        <authorList>
            <person name="Ogihara Y."/>
            <person name="Isono K."/>
            <person name="Kojima T."/>
            <person name="Endo A."/>
            <person name="Hanaoka M."/>
            <person name="Shiina T."/>
            <person name="Terachi T."/>
            <person name="Utsugi S."/>
            <person name="Murata M."/>
            <person name="Mori N."/>
            <person name="Takumi S."/>
            <person name="Ikeo K."/>
            <person name="Gojobori T."/>
            <person name="Murai R."/>
            <person name="Murai K."/>
            <person name="Matsuoka Y."/>
            <person name="Ohnishi Y."/>
            <person name="Tajiri H."/>
            <person name="Tsunewaki K."/>
        </authorList>
    </citation>
    <scope>NUCLEOTIDE SEQUENCE [LARGE SCALE GENOMIC DNA]</scope>
    <source>
        <strain>cv. Chinese Spring</strain>
    </source>
</reference>
<reference key="2">
    <citation type="journal article" date="1988" name="Plant Mol. Biol.">
        <title>Transcription of the wheat chloroplast gene that encodes the 32 kd polypeptide.</title>
        <authorList>
            <person name="Hanley-Bowdoin L."/>
            <person name="Chua N.-H."/>
        </authorList>
        <dbReference type="AGRICOLA" id="IND92000615"/>
    </citation>
    <scope>NUCLEOTIDE SEQUENCE [GENOMIC DNA] OF 1-70</scope>
</reference>
<proteinExistence type="inferred from homology"/>